<proteinExistence type="evidence at protein level"/>
<evidence type="ECO:0000269" key="1">
    <source>
    </source>
</evidence>
<evidence type="ECO:0000269" key="2">
    <source>
    </source>
</evidence>
<evidence type="ECO:0000269" key="3">
    <source>
    </source>
</evidence>
<evidence type="ECO:0000269" key="4">
    <source>
    </source>
</evidence>
<evidence type="ECO:0000305" key="5"/>
<evidence type="ECO:0007744" key="6">
    <source>
        <dbReference type="PDB" id="3IYD"/>
    </source>
</evidence>
<evidence type="ECO:0007744" key="7">
    <source>
        <dbReference type="PDB" id="4MEX"/>
    </source>
</evidence>
<evidence type="ECO:0007744" key="8">
    <source>
        <dbReference type="PDB" id="4MEY"/>
    </source>
</evidence>
<evidence type="ECO:0007744" key="9">
    <source>
        <dbReference type="PDB" id="6TQN"/>
    </source>
</evidence>
<evidence type="ECO:0007744" key="10">
    <source>
        <dbReference type="PDB" id="6TQO"/>
    </source>
</evidence>
<evidence type="ECO:0007829" key="11">
    <source>
        <dbReference type="PDB" id="5UAG"/>
    </source>
</evidence>
<evidence type="ECO:0007829" key="12">
    <source>
        <dbReference type="PDB" id="6XLJ"/>
    </source>
</evidence>
<evidence type="ECO:0007829" key="13">
    <source>
        <dbReference type="PDB" id="7YPB"/>
    </source>
</evidence>
<evidence type="ECO:0007829" key="14">
    <source>
        <dbReference type="PDB" id="8FTD"/>
    </source>
</evidence>
<evidence type="ECO:0007829" key="15">
    <source>
        <dbReference type="PDB" id="8FVW"/>
    </source>
</evidence>
<evidence type="ECO:0007829" key="16">
    <source>
        <dbReference type="PDB" id="8SY6"/>
    </source>
</evidence>
<dbReference type="EC" id="2.7.7.6"/>
<dbReference type="EMBL" id="M24503">
    <property type="protein sequence ID" value="AAB00159.1"/>
    <property type="molecule type" value="Genomic_DNA"/>
</dbReference>
<dbReference type="EMBL" id="M15266">
    <property type="protein sequence ID" value="AAA24229.1"/>
    <property type="molecule type" value="Genomic_DNA"/>
</dbReference>
<dbReference type="EMBL" id="L10328">
    <property type="protein sequence ID" value="AAA62002.1"/>
    <property type="molecule type" value="Genomic_DNA"/>
</dbReference>
<dbReference type="EMBL" id="U00096">
    <property type="protein sequence ID" value="AAC76673.1"/>
    <property type="molecule type" value="Genomic_DNA"/>
</dbReference>
<dbReference type="EMBL" id="AP009048">
    <property type="protein sequence ID" value="BAE77644.1"/>
    <property type="molecule type" value="Genomic_DNA"/>
</dbReference>
<dbReference type="PIR" id="A29038">
    <property type="entry name" value="RNECO"/>
</dbReference>
<dbReference type="RefSeq" id="NP_418106.1">
    <property type="nucleotide sequence ID" value="NC_000913.3"/>
</dbReference>
<dbReference type="RefSeq" id="WP_000135058.1">
    <property type="nucleotide sequence ID" value="NZ_STEB01000024.1"/>
</dbReference>
<dbReference type="PDB" id="3IYD">
    <property type="method" value="EM"/>
    <property type="chains" value="E=2-91"/>
</dbReference>
<dbReference type="PDB" id="3LU0">
    <property type="method" value="EM"/>
    <property type="chains" value="E=1-91"/>
</dbReference>
<dbReference type="PDB" id="4JK1">
    <property type="method" value="X-ray"/>
    <property type="resolution" value="3.90 A"/>
    <property type="chains" value="E/J=1-91"/>
</dbReference>
<dbReference type="PDB" id="4JK2">
    <property type="method" value="X-ray"/>
    <property type="resolution" value="4.20 A"/>
    <property type="chains" value="E/J=1-91"/>
</dbReference>
<dbReference type="PDB" id="4KMU">
    <property type="method" value="X-ray"/>
    <property type="resolution" value="3.85 A"/>
    <property type="chains" value="E/J=1-91"/>
</dbReference>
<dbReference type="PDB" id="4KN4">
    <property type="method" value="X-ray"/>
    <property type="resolution" value="3.96 A"/>
    <property type="chains" value="E/J=1-91"/>
</dbReference>
<dbReference type="PDB" id="4KN7">
    <property type="method" value="X-ray"/>
    <property type="resolution" value="3.69 A"/>
    <property type="chains" value="E/J=1-91"/>
</dbReference>
<dbReference type="PDB" id="4MEX">
    <property type="method" value="X-ray"/>
    <property type="resolution" value="3.90 A"/>
    <property type="chains" value="E/K=1-91"/>
</dbReference>
<dbReference type="PDB" id="4MEY">
    <property type="method" value="X-ray"/>
    <property type="resolution" value="3.95 A"/>
    <property type="chains" value="E/K=1-91"/>
</dbReference>
<dbReference type="PDB" id="4XSX">
    <property type="method" value="X-ray"/>
    <property type="resolution" value="3.71 A"/>
    <property type="chains" value="E/K=1-91"/>
</dbReference>
<dbReference type="PDB" id="4XSY">
    <property type="method" value="X-ray"/>
    <property type="resolution" value="4.01 A"/>
    <property type="chains" value="E/K=1-91"/>
</dbReference>
<dbReference type="PDB" id="4XSZ">
    <property type="method" value="X-ray"/>
    <property type="resolution" value="3.68 A"/>
    <property type="chains" value="E/K=1-91"/>
</dbReference>
<dbReference type="PDB" id="4YG2">
    <property type="method" value="X-ray"/>
    <property type="resolution" value="3.70 A"/>
    <property type="chains" value="E/K=1-91"/>
</dbReference>
<dbReference type="PDB" id="4YLN">
    <property type="method" value="X-ray"/>
    <property type="resolution" value="5.50 A"/>
    <property type="chains" value="E/K/Q=2-91"/>
</dbReference>
<dbReference type="PDB" id="4YLO">
    <property type="method" value="X-ray"/>
    <property type="resolution" value="6.00 A"/>
    <property type="chains" value="E/K/Q=2-91"/>
</dbReference>
<dbReference type="PDB" id="4YLP">
    <property type="method" value="X-ray"/>
    <property type="resolution" value="5.50 A"/>
    <property type="chains" value="E/K/Q=2-91"/>
</dbReference>
<dbReference type="PDB" id="4ZH2">
    <property type="method" value="X-ray"/>
    <property type="resolution" value="4.20 A"/>
    <property type="chains" value="E/K=1-91"/>
</dbReference>
<dbReference type="PDB" id="4ZH3">
    <property type="method" value="X-ray"/>
    <property type="resolution" value="4.08 A"/>
    <property type="chains" value="E/K=1-91"/>
</dbReference>
<dbReference type="PDB" id="4ZH4">
    <property type="method" value="X-ray"/>
    <property type="resolution" value="3.99 A"/>
    <property type="chains" value="E/K=1-91"/>
</dbReference>
<dbReference type="PDB" id="5EZK">
    <property type="method" value="X-ray"/>
    <property type="resolution" value="8.50 A"/>
    <property type="chains" value="E=1-91"/>
</dbReference>
<dbReference type="PDB" id="5IPL">
    <property type="method" value="X-ray"/>
    <property type="resolution" value="3.60 A"/>
    <property type="chains" value="E=2-91"/>
</dbReference>
<dbReference type="PDB" id="5IPM">
    <property type="method" value="X-ray"/>
    <property type="resolution" value="4.20 A"/>
    <property type="chains" value="E=2-91"/>
</dbReference>
<dbReference type="PDB" id="5IPN">
    <property type="method" value="X-ray"/>
    <property type="resolution" value="4.61 A"/>
    <property type="chains" value="E=2-91"/>
</dbReference>
<dbReference type="PDB" id="5MS0">
    <property type="method" value="EM"/>
    <property type="resolution" value="9.80 A"/>
    <property type="chains" value="O=1-91"/>
</dbReference>
<dbReference type="PDB" id="5MY1">
    <property type="method" value="EM"/>
    <property type="resolution" value="7.60 A"/>
    <property type="chains" value="Z=1-91"/>
</dbReference>
<dbReference type="PDB" id="5NSR">
    <property type="method" value="EM"/>
    <property type="resolution" value="3.80 A"/>
    <property type="chains" value="E=1-91"/>
</dbReference>
<dbReference type="PDB" id="5NSS">
    <property type="method" value="EM"/>
    <property type="resolution" value="5.80 A"/>
    <property type="chains" value="E=1-91"/>
</dbReference>
<dbReference type="PDB" id="5NWT">
    <property type="method" value="X-ray"/>
    <property type="resolution" value="3.76 A"/>
    <property type="chains" value="E=1-91"/>
</dbReference>
<dbReference type="PDB" id="5UAC">
    <property type="method" value="X-ray"/>
    <property type="resolution" value="3.80 A"/>
    <property type="chains" value="E/K=1-91"/>
</dbReference>
<dbReference type="PDB" id="5UAG">
    <property type="method" value="X-ray"/>
    <property type="resolution" value="3.40 A"/>
    <property type="chains" value="E/K=2-91"/>
</dbReference>
<dbReference type="PDB" id="5UAH">
    <property type="method" value="X-ray"/>
    <property type="resolution" value="4.10 A"/>
    <property type="chains" value="E/K=1-91"/>
</dbReference>
<dbReference type="PDB" id="5UAJ">
    <property type="method" value="X-ray"/>
    <property type="resolution" value="3.92 A"/>
    <property type="chains" value="E/K=1-91"/>
</dbReference>
<dbReference type="PDB" id="5UAL">
    <property type="method" value="X-ray"/>
    <property type="resolution" value="3.89 A"/>
    <property type="chains" value="E/K=1-91"/>
</dbReference>
<dbReference type="PDB" id="5UAQ">
    <property type="method" value="X-ray"/>
    <property type="resolution" value="3.60 A"/>
    <property type="chains" value="E/K=1-91"/>
</dbReference>
<dbReference type="PDB" id="5UI8">
    <property type="method" value="X-ray"/>
    <property type="resolution" value="3.76 A"/>
    <property type="chains" value="K=1-91"/>
</dbReference>
<dbReference type="PDB" id="5VSW">
    <property type="method" value="X-ray"/>
    <property type="resolution" value="4.29 A"/>
    <property type="chains" value="E/K=1-91"/>
</dbReference>
<dbReference type="PDB" id="5VT0">
    <property type="method" value="EM"/>
    <property type="resolution" value="3.78 A"/>
    <property type="chains" value="K=1-91"/>
</dbReference>
<dbReference type="PDB" id="5W1S">
    <property type="method" value="X-ray"/>
    <property type="resolution" value="3.81 A"/>
    <property type="chains" value="E/K=1-91"/>
</dbReference>
<dbReference type="PDB" id="5W1T">
    <property type="method" value="X-ray"/>
    <property type="resolution" value="4.50 A"/>
    <property type="chains" value="E/K=1-91"/>
</dbReference>
<dbReference type="PDB" id="6ALF">
    <property type="method" value="EM"/>
    <property type="resolution" value="4.10 A"/>
    <property type="chains" value="K=1-80"/>
</dbReference>
<dbReference type="PDB" id="6ALG">
    <property type="method" value="EM"/>
    <property type="resolution" value="3.74 A"/>
    <property type="chains" value="K=1-91"/>
</dbReference>
<dbReference type="PDB" id="6ALH">
    <property type="method" value="EM"/>
    <property type="resolution" value="4.40 A"/>
    <property type="chains" value="K=1-80"/>
</dbReference>
<dbReference type="PDB" id="6ASX">
    <property type="method" value="EM"/>
    <property type="resolution" value="3.80 A"/>
    <property type="chains" value="K=1-84"/>
</dbReference>
<dbReference type="PDB" id="6AWB">
    <property type="method" value="EM"/>
    <property type="resolution" value="6.70 A"/>
    <property type="chains" value="05=2-77"/>
</dbReference>
<dbReference type="PDB" id="6AWC">
    <property type="method" value="EM"/>
    <property type="resolution" value="7.90 A"/>
    <property type="chains" value="05=2-60"/>
</dbReference>
<dbReference type="PDB" id="6AWD">
    <property type="method" value="EM"/>
    <property type="resolution" value="8.10 A"/>
    <property type="chains" value="05=2-60"/>
</dbReference>
<dbReference type="PDB" id="6B6H">
    <property type="method" value="EM"/>
    <property type="resolution" value="3.90 A"/>
    <property type="chains" value="E=1-91"/>
</dbReference>
<dbReference type="PDB" id="6BJS">
    <property type="method" value="EM"/>
    <property type="resolution" value="5.50 A"/>
    <property type="chains" value="K=1-91"/>
</dbReference>
<dbReference type="PDB" id="6BYU">
    <property type="method" value="X-ray"/>
    <property type="resolution" value="3.60 A"/>
    <property type="chains" value="E/K=1-91"/>
</dbReference>
<dbReference type="PDB" id="6C6S">
    <property type="method" value="EM"/>
    <property type="resolution" value="3.70 A"/>
    <property type="chains" value="K=1-91"/>
</dbReference>
<dbReference type="PDB" id="6C6T">
    <property type="method" value="EM"/>
    <property type="resolution" value="3.50 A"/>
    <property type="chains" value="K=1-91"/>
</dbReference>
<dbReference type="PDB" id="6C6U">
    <property type="method" value="EM"/>
    <property type="resolution" value="3.70 A"/>
    <property type="chains" value="K=1-91"/>
</dbReference>
<dbReference type="PDB" id="6C9Y">
    <property type="method" value="EM"/>
    <property type="resolution" value="4.25 A"/>
    <property type="chains" value="E=1-91"/>
</dbReference>
<dbReference type="PDB" id="6CA0">
    <property type="method" value="EM"/>
    <property type="resolution" value="5.75 A"/>
    <property type="chains" value="E=1-91"/>
</dbReference>
<dbReference type="PDB" id="6CUX">
    <property type="method" value="X-ray"/>
    <property type="resolution" value="4.10 A"/>
    <property type="chains" value="E/K=1-91"/>
</dbReference>
<dbReference type="PDB" id="6FLP">
    <property type="method" value="EM"/>
    <property type="resolution" value="4.10 A"/>
    <property type="chains" value="E=1-91"/>
</dbReference>
<dbReference type="PDB" id="6FLQ">
    <property type="method" value="EM"/>
    <property type="resolution" value="4.10 A"/>
    <property type="chains" value="E=1-91"/>
</dbReference>
<dbReference type="PDB" id="6GFW">
    <property type="method" value="EM"/>
    <property type="resolution" value="3.70 A"/>
    <property type="chains" value="E=1-91"/>
</dbReference>
<dbReference type="PDB" id="6GH5">
    <property type="method" value="EM"/>
    <property type="resolution" value="3.40 A"/>
    <property type="chains" value="E=1-91"/>
</dbReference>
<dbReference type="PDB" id="6GH6">
    <property type="method" value="EM"/>
    <property type="resolution" value="4.10 A"/>
    <property type="chains" value="E=1-91"/>
</dbReference>
<dbReference type="PDB" id="6GOV">
    <property type="method" value="EM"/>
    <property type="resolution" value="3.70 A"/>
    <property type="chains" value="W=1-91"/>
</dbReference>
<dbReference type="PDB" id="6JBQ">
    <property type="method" value="EM"/>
    <property type="resolution" value="4.02 A"/>
    <property type="chains" value="E=1-91"/>
</dbReference>
<dbReference type="PDB" id="6JNX">
    <property type="method" value="EM"/>
    <property type="resolution" value="4.08 A"/>
    <property type="chains" value="E=1-91"/>
</dbReference>
<dbReference type="PDB" id="6K4Y">
    <property type="method" value="EM"/>
    <property type="resolution" value="3.79 A"/>
    <property type="chains" value="E=1-91"/>
</dbReference>
<dbReference type="PDB" id="6KJ6">
    <property type="method" value="EM"/>
    <property type="resolution" value="3.80 A"/>
    <property type="chains" value="E=1-91"/>
</dbReference>
<dbReference type="PDB" id="6LDI">
    <property type="method" value="EM"/>
    <property type="resolution" value="3.69 A"/>
    <property type="chains" value="E=1-91"/>
</dbReference>
<dbReference type="PDB" id="6N4C">
    <property type="method" value="EM"/>
    <property type="resolution" value="17.00 A"/>
    <property type="chains" value="E=2-91"/>
</dbReference>
<dbReference type="PDB" id="6N57">
    <property type="method" value="EM"/>
    <property type="resolution" value="3.70 A"/>
    <property type="chains" value="K=1-91"/>
</dbReference>
<dbReference type="PDB" id="6N58">
    <property type="method" value="EM"/>
    <property type="resolution" value="3.78 A"/>
    <property type="chains" value="K=1-91"/>
</dbReference>
<dbReference type="PDB" id="6N60">
    <property type="method" value="X-ray"/>
    <property type="resolution" value="3.68 A"/>
    <property type="chains" value="E=1-91"/>
</dbReference>
<dbReference type="PDB" id="6N61">
    <property type="method" value="X-ray"/>
    <property type="resolution" value="3.25 A"/>
    <property type="chains" value="E=1-90"/>
</dbReference>
<dbReference type="PDB" id="6N62">
    <property type="method" value="X-ray"/>
    <property type="resolution" value="3.80 A"/>
    <property type="chains" value="E=1-91"/>
</dbReference>
<dbReference type="PDB" id="6OMF">
    <property type="method" value="EM"/>
    <property type="resolution" value="3.26 A"/>
    <property type="chains" value="E=1-91"/>
</dbReference>
<dbReference type="PDB" id="6OUL">
    <property type="method" value="EM"/>
    <property type="resolution" value="3.40 A"/>
    <property type="chains" value="K=1-91"/>
</dbReference>
<dbReference type="PDB" id="6P18">
    <property type="method" value="EM"/>
    <property type="resolution" value="3.50 A"/>
    <property type="chains" value="E=1-91"/>
</dbReference>
<dbReference type="PDB" id="6P19">
    <property type="method" value="EM"/>
    <property type="resolution" value="3.80 A"/>
    <property type="chains" value="E=1-91"/>
</dbReference>
<dbReference type="PDB" id="6P1K">
    <property type="method" value="EM"/>
    <property type="resolution" value="4.05 A"/>
    <property type="chains" value="K=1-91"/>
</dbReference>
<dbReference type="PDB" id="6PB4">
    <property type="method" value="EM"/>
    <property type="resolution" value="4.35 A"/>
    <property type="chains" value="E=1-91"/>
</dbReference>
<dbReference type="PDB" id="6PB5">
    <property type="method" value="EM"/>
    <property type="resolution" value="4.52 A"/>
    <property type="chains" value="E=1-91"/>
</dbReference>
<dbReference type="PDB" id="6PB6">
    <property type="method" value="EM"/>
    <property type="resolution" value="4.29 A"/>
    <property type="chains" value="E=1-91"/>
</dbReference>
<dbReference type="PDB" id="6PMI">
    <property type="method" value="EM"/>
    <property type="resolution" value="3.86 A"/>
    <property type="chains" value="E=1-91"/>
</dbReference>
<dbReference type="PDB" id="6PMJ">
    <property type="method" value="EM"/>
    <property type="resolution" value="3.91 A"/>
    <property type="chains" value="E=1-91"/>
</dbReference>
<dbReference type="PDB" id="6PSQ">
    <property type="method" value="EM"/>
    <property type="resolution" value="3.40 A"/>
    <property type="chains" value="K=1-91"/>
</dbReference>
<dbReference type="PDB" id="6PSR">
    <property type="method" value="EM"/>
    <property type="resolution" value="3.40 A"/>
    <property type="chains" value="K=1-91"/>
</dbReference>
<dbReference type="PDB" id="6PSS">
    <property type="method" value="EM"/>
    <property type="resolution" value="3.50 A"/>
    <property type="chains" value="K=1-91"/>
</dbReference>
<dbReference type="PDB" id="6PST">
    <property type="method" value="EM"/>
    <property type="resolution" value="3.00 A"/>
    <property type="chains" value="K=1-91"/>
</dbReference>
<dbReference type="PDB" id="6PSU">
    <property type="method" value="EM"/>
    <property type="resolution" value="3.90 A"/>
    <property type="chains" value="K=1-91"/>
</dbReference>
<dbReference type="PDB" id="6PSV">
    <property type="method" value="EM"/>
    <property type="resolution" value="3.50 A"/>
    <property type="chains" value="K=1-91"/>
</dbReference>
<dbReference type="PDB" id="6PSW">
    <property type="method" value="EM"/>
    <property type="resolution" value="3.70 A"/>
    <property type="chains" value="K=1-91"/>
</dbReference>
<dbReference type="PDB" id="6R9B">
    <property type="method" value="EM"/>
    <property type="resolution" value="3.80 A"/>
    <property type="chains" value="E=1-80"/>
</dbReference>
<dbReference type="PDB" id="6R9G">
    <property type="method" value="EM"/>
    <property type="resolution" value="3.70 A"/>
    <property type="chains" value="E=1-80"/>
</dbReference>
<dbReference type="PDB" id="6RI7">
    <property type="method" value="EM"/>
    <property type="resolution" value="3.90 A"/>
    <property type="chains" value="E=1-91"/>
</dbReference>
<dbReference type="PDB" id="6RI9">
    <property type="method" value="EM"/>
    <property type="resolution" value="3.70 A"/>
    <property type="chains" value="E=1-91"/>
</dbReference>
<dbReference type="PDB" id="6RIN">
    <property type="method" value="EM"/>
    <property type="resolution" value="3.70 A"/>
    <property type="chains" value="E=1-91"/>
</dbReference>
<dbReference type="PDB" id="6RIP">
    <property type="method" value="EM"/>
    <property type="resolution" value="3.40 A"/>
    <property type="chains" value="E=1-91"/>
</dbReference>
<dbReference type="PDB" id="6TQN">
    <property type="method" value="EM"/>
    <property type="resolution" value="3.80 A"/>
    <property type="chains" value="W=1-91"/>
</dbReference>
<dbReference type="PDB" id="6TQO">
    <property type="method" value="EM"/>
    <property type="resolution" value="3.80 A"/>
    <property type="chains" value="W=1-91"/>
</dbReference>
<dbReference type="PDB" id="6UTV">
    <property type="method" value="X-ray"/>
    <property type="resolution" value="3.45 A"/>
    <property type="chains" value="EEE=2-91"/>
</dbReference>
<dbReference type="PDB" id="6UTW">
    <property type="method" value="X-ray"/>
    <property type="resolution" value="3.85 A"/>
    <property type="chains" value="EEE=2-91"/>
</dbReference>
<dbReference type="PDB" id="6UTX">
    <property type="method" value="X-ray"/>
    <property type="resolution" value="4.05 A"/>
    <property type="chains" value="EEE=2-91"/>
</dbReference>
<dbReference type="PDB" id="6UTY">
    <property type="method" value="X-ray"/>
    <property type="resolution" value="4.15 A"/>
    <property type="chains" value="EEE=2-91"/>
</dbReference>
<dbReference type="PDB" id="6UTZ">
    <property type="method" value="X-ray"/>
    <property type="resolution" value="3.80 A"/>
    <property type="chains" value="EEE=2-91"/>
</dbReference>
<dbReference type="PDB" id="6UU0">
    <property type="method" value="X-ray"/>
    <property type="resolution" value="3.90 A"/>
    <property type="chains" value="EEE=2-91"/>
</dbReference>
<dbReference type="PDB" id="6UU1">
    <property type="method" value="X-ray"/>
    <property type="resolution" value="4.10 A"/>
    <property type="chains" value="EEE=2-91"/>
</dbReference>
<dbReference type="PDB" id="6UU2">
    <property type="method" value="X-ray"/>
    <property type="resolution" value="4.40 A"/>
    <property type="chains" value="EEE=2-91"/>
</dbReference>
<dbReference type="PDB" id="6UU3">
    <property type="method" value="X-ray"/>
    <property type="resolution" value="4.00 A"/>
    <property type="chains" value="EEE=2-91"/>
</dbReference>
<dbReference type="PDB" id="6UU4">
    <property type="method" value="X-ray"/>
    <property type="resolution" value="4.30 A"/>
    <property type="chains" value="EEE=2-91"/>
</dbReference>
<dbReference type="PDB" id="6UU5">
    <property type="method" value="X-ray"/>
    <property type="resolution" value="5.40 A"/>
    <property type="chains" value="EEE=2-91"/>
</dbReference>
<dbReference type="PDB" id="6UU6">
    <property type="method" value="X-ray"/>
    <property type="resolution" value="4.20 A"/>
    <property type="chains" value="EEE=2-91"/>
</dbReference>
<dbReference type="PDB" id="6UU7">
    <property type="method" value="X-ray"/>
    <property type="resolution" value="4.40 A"/>
    <property type="chains" value="EEE=2-91"/>
</dbReference>
<dbReference type="PDB" id="6UU8">
    <property type="method" value="X-ray"/>
    <property type="resolution" value="4.40 A"/>
    <property type="chains" value="EEE=2-91"/>
</dbReference>
<dbReference type="PDB" id="6UU9">
    <property type="method" value="X-ray"/>
    <property type="resolution" value="5.40 A"/>
    <property type="chains" value="EEE=2-91"/>
</dbReference>
<dbReference type="PDB" id="6UUA">
    <property type="method" value="X-ray"/>
    <property type="resolution" value="4.00 A"/>
    <property type="chains" value="EEE=2-91"/>
</dbReference>
<dbReference type="PDB" id="6UUB">
    <property type="method" value="X-ray"/>
    <property type="resolution" value="3.96 A"/>
    <property type="chains" value="EEE=2-91"/>
</dbReference>
<dbReference type="PDB" id="6UUC">
    <property type="method" value="X-ray"/>
    <property type="resolution" value="4.10 A"/>
    <property type="chains" value="EEE=2-91"/>
</dbReference>
<dbReference type="PDB" id="6VJS">
    <property type="method" value="X-ray"/>
    <property type="resolution" value="4.02 A"/>
    <property type="chains" value="E/J=1-91"/>
</dbReference>
<dbReference type="PDB" id="6VYU">
    <property type="method" value="EM"/>
    <property type="resolution" value="7.00 A"/>
    <property type="chains" value="AF=1-91"/>
</dbReference>
<dbReference type="PDB" id="6VYW">
    <property type="method" value="EM"/>
    <property type="resolution" value="7.00 A"/>
    <property type="chains" value="AF=1-91"/>
</dbReference>
<dbReference type="PDB" id="6VYX">
    <property type="method" value="EM"/>
    <property type="resolution" value="9.90 A"/>
    <property type="chains" value="AF=1-91"/>
</dbReference>
<dbReference type="PDB" id="6VYY">
    <property type="method" value="EM"/>
    <property type="resolution" value="9.90 A"/>
    <property type="chains" value="AF=1-91"/>
</dbReference>
<dbReference type="PDB" id="6VYZ">
    <property type="method" value="EM"/>
    <property type="resolution" value="9.90 A"/>
    <property type="chains" value="AF=1-91"/>
</dbReference>
<dbReference type="PDB" id="6VZ2">
    <property type="method" value="EM"/>
    <property type="resolution" value="10.00 A"/>
    <property type="chains" value="AF=1-91"/>
</dbReference>
<dbReference type="PDB" id="6VZ3">
    <property type="method" value="EM"/>
    <property type="resolution" value="8.90 A"/>
    <property type="chains" value="AF=2-84"/>
</dbReference>
<dbReference type="PDB" id="6VZ5">
    <property type="method" value="EM"/>
    <property type="resolution" value="8.90 A"/>
    <property type="chains" value="AF=1-91"/>
</dbReference>
<dbReference type="PDB" id="6VZ7">
    <property type="method" value="EM"/>
    <property type="resolution" value="7.00 A"/>
    <property type="chains" value="AF=2-84"/>
</dbReference>
<dbReference type="PDB" id="6WMU">
    <property type="method" value="EM"/>
    <property type="resolution" value="3.18 A"/>
    <property type="chains" value="E=1-91"/>
</dbReference>
<dbReference type="PDB" id="6X26">
    <property type="method" value="EM"/>
    <property type="resolution" value="4.10 A"/>
    <property type="chains" value="K=1-91"/>
</dbReference>
<dbReference type="PDB" id="6X2F">
    <property type="method" value="EM"/>
    <property type="resolution" value="4.00 A"/>
    <property type="chains" value="K=1-91"/>
</dbReference>
<dbReference type="PDB" id="6X2N">
    <property type="method" value="EM"/>
    <property type="resolution" value="3.90 A"/>
    <property type="chains" value="K=1-91"/>
</dbReference>
<dbReference type="PDB" id="6X43">
    <property type="method" value="EM"/>
    <property type="resolution" value="3.60 A"/>
    <property type="chains" value="K=1-91"/>
</dbReference>
<dbReference type="PDB" id="6X4W">
    <property type="method" value="EM"/>
    <property type="resolution" value="3.80 A"/>
    <property type="chains" value="K=1-91"/>
</dbReference>
<dbReference type="PDB" id="6X4Y">
    <property type="method" value="EM"/>
    <property type="resolution" value="3.60 A"/>
    <property type="chains" value="K=1-91"/>
</dbReference>
<dbReference type="PDB" id="6X50">
    <property type="method" value="EM"/>
    <property type="resolution" value="3.30 A"/>
    <property type="chains" value="K=1-91"/>
</dbReference>
<dbReference type="PDB" id="6X6T">
    <property type="method" value="EM"/>
    <property type="resolution" value="3.20 A"/>
    <property type="chains" value="AF=1-91"/>
</dbReference>
<dbReference type="PDB" id="6X7F">
    <property type="method" value="EM"/>
    <property type="resolution" value="3.50 A"/>
    <property type="chains" value="AF=1-91"/>
</dbReference>
<dbReference type="PDB" id="6X7K">
    <property type="method" value="EM"/>
    <property type="resolution" value="3.10 A"/>
    <property type="chains" value="AF=1-91"/>
</dbReference>
<dbReference type="PDB" id="6X9Q">
    <property type="method" value="EM"/>
    <property type="resolution" value="4.80 A"/>
    <property type="chains" value="AF=1-91"/>
</dbReference>
<dbReference type="PDB" id="6XAS">
    <property type="method" value="EM"/>
    <property type="resolution" value="3.80 A"/>
    <property type="chains" value="W=1-91"/>
</dbReference>
<dbReference type="PDB" id="6XAV">
    <property type="method" value="EM"/>
    <property type="resolution" value="7.70 A"/>
    <property type="chains" value="W=1-91"/>
</dbReference>
<dbReference type="PDB" id="6XDQ">
    <property type="method" value="EM"/>
    <property type="resolution" value="3.70 A"/>
    <property type="chains" value="AF=1-91"/>
</dbReference>
<dbReference type="PDB" id="6XDR">
    <property type="method" value="EM"/>
    <property type="resolution" value="4.70 A"/>
    <property type="chains" value="AF=1-91"/>
</dbReference>
<dbReference type="PDB" id="6XGF">
    <property type="method" value="EM"/>
    <property type="resolution" value="5.00 A"/>
    <property type="chains" value="AF=1-91"/>
</dbReference>
<dbReference type="PDB" id="6XH7">
    <property type="method" value="EM"/>
    <property type="resolution" value="3.90 A"/>
    <property type="chains" value="E=1-91"/>
</dbReference>
<dbReference type="PDB" id="6XH8">
    <property type="method" value="EM"/>
    <property type="resolution" value="4.10 A"/>
    <property type="chains" value="E=1-91"/>
</dbReference>
<dbReference type="PDB" id="6XII">
    <property type="method" value="EM"/>
    <property type="resolution" value="7.00 A"/>
    <property type="chains" value="AF=1-91"/>
</dbReference>
<dbReference type="PDB" id="6XL5">
    <property type="method" value="EM"/>
    <property type="resolution" value="2.50 A"/>
    <property type="chains" value="E=1-91"/>
</dbReference>
<dbReference type="PDB" id="6XLJ">
    <property type="method" value="EM"/>
    <property type="resolution" value="2.70 A"/>
    <property type="chains" value="E=1-91"/>
</dbReference>
<dbReference type="PDB" id="6XLL">
    <property type="method" value="EM"/>
    <property type="resolution" value="2.70 A"/>
    <property type="chains" value="E=1-91"/>
</dbReference>
<dbReference type="PDB" id="6XLM">
    <property type="method" value="EM"/>
    <property type="resolution" value="3.20 A"/>
    <property type="chains" value="E=1-91"/>
</dbReference>
<dbReference type="PDB" id="6XLN">
    <property type="method" value="EM"/>
    <property type="resolution" value="2.80 A"/>
    <property type="chains" value="E=1-91"/>
</dbReference>
<dbReference type="PDB" id="6Z9P">
    <property type="method" value="EM"/>
    <property type="resolution" value="3.90 A"/>
    <property type="chains" value="W=1-91"/>
</dbReference>
<dbReference type="PDB" id="6Z9Q">
    <property type="method" value="EM"/>
    <property type="resolution" value="5.70 A"/>
    <property type="chains" value="W=1-91"/>
</dbReference>
<dbReference type="PDB" id="6Z9R">
    <property type="method" value="EM"/>
    <property type="resolution" value="4.10 A"/>
    <property type="chains" value="W=1-91"/>
</dbReference>
<dbReference type="PDB" id="6Z9S">
    <property type="method" value="EM"/>
    <property type="resolution" value="4.40 A"/>
    <property type="chains" value="W=1-91"/>
</dbReference>
<dbReference type="PDB" id="6Z9T">
    <property type="method" value="EM"/>
    <property type="resolution" value="4.10 A"/>
    <property type="chains" value="W=1-91"/>
</dbReference>
<dbReference type="PDB" id="6ZTJ">
    <property type="method" value="EM"/>
    <property type="resolution" value="3.40 A"/>
    <property type="chains" value="CE=1-91"/>
</dbReference>
<dbReference type="PDB" id="6ZTL">
    <property type="method" value="EM"/>
    <property type="resolution" value="3.50 A"/>
    <property type="chains" value="CE=1-91"/>
</dbReference>
<dbReference type="PDB" id="6ZTN">
    <property type="method" value="EM"/>
    <property type="resolution" value="3.90 A"/>
    <property type="chains" value="CE=1-91"/>
</dbReference>
<dbReference type="PDB" id="6ZTO">
    <property type="method" value="EM"/>
    <property type="resolution" value="3.00 A"/>
    <property type="chains" value="CE=1-91"/>
</dbReference>
<dbReference type="PDB" id="6ZTP">
    <property type="method" value="EM"/>
    <property type="resolution" value="3.00 A"/>
    <property type="chains" value="CE=1-91"/>
</dbReference>
<dbReference type="PDB" id="6ZU1">
    <property type="method" value="EM"/>
    <property type="resolution" value="3.00 A"/>
    <property type="chains" value="CE=1-91"/>
</dbReference>
<dbReference type="PDB" id="7ADB">
    <property type="method" value="EM"/>
    <property type="resolution" value="4.40 A"/>
    <property type="chains" value="W=1-91"/>
</dbReference>
<dbReference type="PDB" id="7ADC">
    <property type="method" value="EM"/>
    <property type="resolution" value="4.00 A"/>
    <property type="chains" value="W=1-91"/>
</dbReference>
<dbReference type="PDB" id="7ADD">
    <property type="method" value="EM"/>
    <property type="resolution" value="4.30 A"/>
    <property type="chains" value="W=1-91"/>
</dbReference>
<dbReference type="PDB" id="7ADE">
    <property type="method" value="EM"/>
    <property type="resolution" value="4.20 A"/>
    <property type="chains" value="W=1-91"/>
</dbReference>
<dbReference type="PDB" id="7BEF">
    <property type="method" value="EM"/>
    <property type="resolution" value="4.50 A"/>
    <property type="chains" value="E=1-91"/>
</dbReference>
<dbReference type="PDB" id="7BEG">
    <property type="method" value="EM"/>
    <property type="resolution" value="4.20 A"/>
    <property type="chains" value="E=1-91"/>
</dbReference>
<dbReference type="PDB" id="7C17">
    <property type="method" value="EM"/>
    <property type="resolution" value="4.22 A"/>
    <property type="chains" value="E=1-91"/>
</dbReference>
<dbReference type="PDB" id="7C97">
    <property type="method" value="EM"/>
    <property type="resolution" value="3.68 A"/>
    <property type="chains" value="E=1-91"/>
</dbReference>
<dbReference type="PDB" id="7CHW">
    <property type="method" value="EM"/>
    <property type="resolution" value="3.58 A"/>
    <property type="chains" value="E=1-91"/>
</dbReference>
<dbReference type="PDB" id="7DY6">
    <property type="method" value="EM"/>
    <property type="resolution" value="3.68 A"/>
    <property type="chains" value="E=1-91"/>
</dbReference>
<dbReference type="PDB" id="7KHB">
    <property type="method" value="EM"/>
    <property type="resolution" value="3.53 A"/>
    <property type="chains" value="E=1-91"/>
</dbReference>
<dbReference type="PDB" id="7KHC">
    <property type="method" value="EM"/>
    <property type="resolution" value="4.14 A"/>
    <property type="chains" value="E=1-91"/>
</dbReference>
<dbReference type="PDB" id="7KHE">
    <property type="method" value="EM"/>
    <property type="resolution" value="3.58 A"/>
    <property type="chains" value="E=1-91"/>
</dbReference>
<dbReference type="PDB" id="7KHI">
    <property type="method" value="EM"/>
    <property type="resolution" value="3.62 A"/>
    <property type="chains" value="E=1-91"/>
</dbReference>
<dbReference type="PDB" id="7M8E">
    <property type="method" value="EM"/>
    <property type="resolution" value="3.40 A"/>
    <property type="chains" value="E=1-91"/>
</dbReference>
<dbReference type="PDB" id="7MKD">
    <property type="method" value="EM"/>
    <property type="resolution" value="3.20 A"/>
    <property type="chains" value="K=1-91"/>
</dbReference>
<dbReference type="PDB" id="7MKE">
    <property type="method" value="EM"/>
    <property type="resolution" value="3.70 A"/>
    <property type="chains" value="K=1-91"/>
</dbReference>
<dbReference type="PDB" id="7MKI">
    <property type="method" value="EM"/>
    <property type="resolution" value="3.50 A"/>
    <property type="chains" value="K=1-91"/>
</dbReference>
<dbReference type="PDB" id="7MKJ">
    <property type="method" value="EM"/>
    <property type="resolution" value="2.90 A"/>
    <property type="chains" value="K=1-91"/>
</dbReference>
<dbReference type="PDB" id="7MKN">
    <property type="method" value="EM"/>
    <property type="resolution" value="3.30 A"/>
    <property type="chains" value="E=1-91"/>
</dbReference>
<dbReference type="PDB" id="7MKO">
    <property type="method" value="EM"/>
    <property type="resolution" value="3.15 A"/>
    <property type="chains" value="E=1-91"/>
</dbReference>
<dbReference type="PDB" id="7MKP">
    <property type="method" value="EM"/>
    <property type="resolution" value="3.41 A"/>
    <property type="chains" value="E=1-91"/>
</dbReference>
<dbReference type="PDB" id="7MKQ">
    <property type="method" value="EM"/>
    <property type="resolution" value="4.80 A"/>
    <property type="chains" value="E=1-91"/>
</dbReference>
<dbReference type="PDB" id="7N4E">
    <property type="method" value="EM"/>
    <property type="resolution" value="3.80 A"/>
    <property type="chains" value="E=1-91"/>
</dbReference>
<dbReference type="PDB" id="7PY0">
    <property type="method" value="EM"/>
    <property type="resolution" value="4.50 A"/>
    <property type="chains" value="E=1-91"/>
</dbReference>
<dbReference type="PDB" id="7PY1">
    <property type="method" value="EM"/>
    <property type="resolution" value="3.80 A"/>
    <property type="chains" value="E=1-91"/>
</dbReference>
<dbReference type="PDB" id="7PY3">
    <property type="method" value="EM"/>
    <property type="resolution" value="3.80 A"/>
    <property type="chains" value="E=1-91"/>
</dbReference>
<dbReference type="PDB" id="7PY5">
    <property type="method" value="EM"/>
    <property type="resolution" value="3.90 A"/>
    <property type="chains" value="E=1-91"/>
</dbReference>
<dbReference type="PDB" id="7PY6">
    <property type="method" value="EM"/>
    <property type="resolution" value="4.10 A"/>
    <property type="chains" value="E=1-91"/>
</dbReference>
<dbReference type="PDB" id="7PY7">
    <property type="method" value="EM"/>
    <property type="resolution" value="4.10 A"/>
    <property type="chains" value="E=1-91"/>
</dbReference>
<dbReference type="PDB" id="7PY8">
    <property type="method" value="EM"/>
    <property type="resolution" value="3.80 A"/>
    <property type="chains" value="E=1-91"/>
</dbReference>
<dbReference type="PDB" id="7PYJ">
    <property type="method" value="EM"/>
    <property type="resolution" value="4.20 A"/>
    <property type="chains" value="E=1-91"/>
</dbReference>
<dbReference type="PDB" id="7PYK">
    <property type="method" value="EM"/>
    <property type="resolution" value="4.10 A"/>
    <property type="chains" value="E=1-91"/>
</dbReference>
<dbReference type="PDB" id="7Q0J">
    <property type="method" value="EM"/>
    <property type="resolution" value="4.30 A"/>
    <property type="chains" value="E=1-91"/>
</dbReference>
<dbReference type="PDB" id="7Q0K">
    <property type="method" value="EM"/>
    <property type="resolution" value="4.00 A"/>
    <property type="chains" value="E=1-91"/>
</dbReference>
<dbReference type="PDB" id="7QV9">
    <property type="method" value="EM"/>
    <property type="resolution" value="3.50 A"/>
    <property type="chains" value="E=1-91"/>
</dbReference>
<dbReference type="PDB" id="7QWP">
    <property type="method" value="EM"/>
    <property type="resolution" value="3.40 A"/>
    <property type="chains" value="E=1-91"/>
</dbReference>
<dbReference type="PDB" id="7QXI">
    <property type="method" value="EM"/>
    <property type="resolution" value="3.40 A"/>
    <property type="chains" value="E=1-91"/>
</dbReference>
<dbReference type="PDB" id="7SZJ">
    <property type="method" value="EM"/>
    <property type="resolution" value="3.11 A"/>
    <property type="chains" value="E=1-91"/>
</dbReference>
<dbReference type="PDB" id="7SZK">
    <property type="method" value="EM"/>
    <property type="resolution" value="2.94 A"/>
    <property type="chains" value="E=1-91"/>
</dbReference>
<dbReference type="PDB" id="7UBM">
    <property type="method" value="EM"/>
    <property type="resolution" value="3.13 A"/>
    <property type="chains" value="E=1-91"/>
</dbReference>
<dbReference type="PDB" id="7UBN">
    <property type="method" value="EM"/>
    <property type="resolution" value="3.36 A"/>
    <property type="chains" value="E=1-91"/>
</dbReference>
<dbReference type="PDB" id="7UWE">
    <property type="method" value="EM"/>
    <property type="resolution" value="2.90 A"/>
    <property type="chains" value="K=1-91"/>
</dbReference>
<dbReference type="PDB" id="7UWH">
    <property type="method" value="EM"/>
    <property type="resolution" value="3.10 A"/>
    <property type="chains" value="K=1-91"/>
</dbReference>
<dbReference type="PDB" id="7VWY">
    <property type="method" value="EM"/>
    <property type="resolution" value="4.57 A"/>
    <property type="chains" value="E=1-91"/>
</dbReference>
<dbReference type="PDB" id="7VWZ">
    <property type="method" value="EM"/>
    <property type="resolution" value="4.00 A"/>
    <property type="chains" value="E=1-91"/>
</dbReference>
<dbReference type="PDB" id="7W5W">
    <property type="method" value="EM"/>
    <property type="resolution" value="4.55 A"/>
    <property type="chains" value="E=1-91"/>
</dbReference>
<dbReference type="PDB" id="7W5X">
    <property type="method" value="EM"/>
    <property type="resolution" value="3.40 A"/>
    <property type="chains" value="E=1-91"/>
</dbReference>
<dbReference type="PDB" id="7W5Y">
    <property type="method" value="EM"/>
    <property type="resolution" value="4.20 A"/>
    <property type="chains" value="E=1-91"/>
</dbReference>
<dbReference type="PDB" id="7XUE">
    <property type="method" value="EM"/>
    <property type="resolution" value="3.17 A"/>
    <property type="chains" value="K=1-91"/>
</dbReference>
<dbReference type="PDB" id="7XUG">
    <property type="method" value="EM"/>
    <property type="resolution" value="3.57 A"/>
    <property type="chains" value="K=1-91"/>
</dbReference>
<dbReference type="PDB" id="7XUI">
    <property type="method" value="EM"/>
    <property type="resolution" value="3.61 A"/>
    <property type="chains" value="K=1-91"/>
</dbReference>
<dbReference type="PDB" id="7YP9">
    <property type="method" value="EM"/>
    <property type="resolution" value="3.58 A"/>
    <property type="chains" value="E=1-91"/>
</dbReference>
<dbReference type="PDB" id="7YPA">
    <property type="method" value="EM"/>
    <property type="resolution" value="3.05 A"/>
    <property type="chains" value="E=1-91"/>
</dbReference>
<dbReference type="PDB" id="7YPB">
    <property type="method" value="EM"/>
    <property type="resolution" value="3.48 A"/>
    <property type="chains" value="E=1-91"/>
</dbReference>
<dbReference type="PDB" id="8ABY">
    <property type="method" value="EM"/>
    <property type="resolution" value="3.70 A"/>
    <property type="chains" value="E=1-91"/>
</dbReference>
<dbReference type="PDB" id="8ABZ">
    <property type="method" value="EM"/>
    <property type="resolution" value="3.40 A"/>
    <property type="chains" value="E=1-91"/>
</dbReference>
<dbReference type="PDB" id="8AC0">
    <property type="method" value="EM"/>
    <property type="resolution" value="4.10 A"/>
    <property type="chains" value="E=1-91"/>
</dbReference>
<dbReference type="PDB" id="8AC1">
    <property type="method" value="EM"/>
    <property type="resolution" value="4.06 A"/>
    <property type="chains" value="E=1-91"/>
</dbReference>
<dbReference type="PDB" id="8AC2">
    <property type="method" value="EM"/>
    <property type="resolution" value="3.70 A"/>
    <property type="chains" value="E=1-91"/>
</dbReference>
<dbReference type="PDB" id="8ACP">
    <property type="method" value="EM"/>
    <property type="resolution" value="4.50 A"/>
    <property type="chains" value="E=1-91"/>
</dbReference>
<dbReference type="PDB" id="8AD1">
    <property type="method" value="EM"/>
    <property type="resolution" value="4.10 A"/>
    <property type="chains" value="E=1-91"/>
</dbReference>
<dbReference type="PDB" id="8E3F">
    <property type="method" value="EM"/>
    <property type="resolution" value="6.50 A"/>
    <property type="chains" value="E=1-91"/>
</dbReference>
<dbReference type="PDB" id="8E5K">
    <property type="method" value="EM"/>
    <property type="resolution" value="4.20 A"/>
    <property type="chains" value="E=1-91"/>
</dbReference>
<dbReference type="PDB" id="8E5O">
    <property type="method" value="EM"/>
    <property type="resolution" value="4.40 A"/>
    <property type="chains" value="E=1-91"/>
</dbReference>
<dbReference type="PDB" id="8E6X">
    <property type="method" value="EM"/>
    <property type="resolution" value="4.27 A"/>
    <property type="chains" value="E=1-91"/>
</dbReference>
<dbReference type="PDB" id="8E6Z">
    <property type="method" value="EM"/>
    <property type="resolution" value="4.10 A"/>
    <property type="chains" value="E=1-91"/>
</dbReference>
<dbReference type="PDB" id="8EG7">
    <property type="method" value="EM"/>
    <property type="resolution" value="3.20 A"/>
    <property type="chains" value="K=1-91"/>
</dbReference>
<dbReference type="PDB" id="8EG8">
    <property type="method" value="EM"/>
    <property type="resolution" value="3.30 A"/>
    <property type="chains" value="K=1-91"/>
</dbReference>
<dbReference type="PDB" id="8EGB">
    <property type="method" value="EM"/>
    <property type="resolution" value="3.80 A"/>
    <property type="chains" value="K=1-91"/>
</dbReference>
<dbReference type="PDB" id="8EH8">
    <property type="method" value="EM"/>
    <property type="resolution" value="3.40 A"/>
    <property type="chains" value="K=1-91"/>
</dbReference>
<dbReference type="PDB" id="8EH9">
    <property type="method" value="EM"/>
    <property type="resolution" value="3.90 A"/>
    <property type="chains" value="K=1-91"/>
</dbReference>
<dbReference type="PDB" id="8EHA">
    <property type="method" value="EM"/>
    <property type="resolution" value="3.70 A"/>
    <property type="chains" value="K=1-91"/>
</dbReference>
<dbReference type="PDB" id="8EHF">
    <property type="method" value="EM"/>
    <property type="resolution" value="3.30 A"/>
    <property type="chains" value="K=1-91"/>
</dbReference>
<dbReference type="PDB" id="8EHI">
    <property type="method" value="EM"/>
    <property type="resolution" value="5.50 A"/>
    <property type="chains" value="K=1-91"/>
</dbReference>
<dbReference type="PDB" id="8F1I">
    <property type="method" value="EM"/>
    <property type="resolution" value="3.00 A"/>
    <property type="chains" value="K=1-91"/>
</dbReference>
<dbReference type="PDB" id="8F1J">
    <property type="method" value="EM"/>
    <property type="resolution" value="2.60 A"/>
    <property type="chains" value="K=1-91"/>
</dbReference>
<dbReference type="PDB" id="8F1K">
    <property type="method" value="EM"/>
    <property type="resolution" value="2.80 A"/>
    <property type="chains" value="K=1-91"/>
</dbReference>
<dbReference type="PDB" id="8F3C">
    <property type="method" value="EM"/>
    <property type="resolution" value="3.40 A"/>
    <property type="chains" value="K=1-91"/>
</dbReference>
<dbReference type="PDB" id="8FIX">
    <property type="method" value="EM"/>
    <property type="resolution" value="3.90 A"/>
    <property type="chains" value="E=1-91"/>
</dbReference>
<dbReference type="PDB" id="8FTD">
    <property type="method" value="EM"/>
    <property type="resolution" value="2.76 A"/>
    <property type="chains" value="K=1-91"/>
</dbReference>
<dbReference type="PDB" id="8FVR">
    <property type="method" value="EM"/>
    <property type="resolution" value="2.42 A"/>
    <property type="chains" value="H=1-91"/>
</dbReference>
<dbReference type="PDB" id="8FVW">
    <property type="method" value="EM"/>
    <property type="resolution" value="2.10 A"/>
    <property type="chains" value="H=1-91"/>
</dbReference>
<dbReference type="PDB" id="8G00">
    <property type="method" value="EM"/>
    <property type="resolution" value="3.40 A"/>
    <property type="chains" value="K=1-91"/>
</dbReference>
<dbReference type="PDB" id="8G1S">
    <property type="method" value="EM"/>
    <property type="resolution" value="3.70 A"/>
    <property type="chains" value="K=1-80"/>
</dbReference>
<dbReference type="PDB" id="8G2W">
    <property type="method" value="EM"/>
    <property type="resolution" value="3.70 A"/>
    <property type="chains" value="K=2-80"/>
</dbReference>
<dbReference type="PDB" id="8G4W">
    <property type="method" value="EM"/>
    <property type="resolution" value="3.80 A"/>
    <property type="chains" value="K=2-80"/>
</dbReference>
<dbReference type="PDB" id="8G7E">
    <property type="method" value="EM"/>
    <property type="resolution" value="3.90 A"/>
    <property type="chains" value="K=2-80"/>
</dbReference>
<dbReference type="PDB" id="8G8Z">
    <property type="method" value="EM"/>
    <property type="resolution" value="4.30 A"/>
    <property type="chains" value="K=1-80"/>
</dbReference>
<dbReference type="PDB" id="8IGR">
    <property type="method" value="EM"/>
    <property type="resolution" value="3.10 A"/>
    <property type="chains" value="K=1-91"/>
</dbReference>
<dbReference type="PDB" id="8IGS">
    <property type="method" value="EM"/>
    <property type="resolution" value="3.40 A"/>
    <property type="chains" value="K=1-91"/>
</dbReference>
<dbReference type="PDB" id="8JO2">
    <property type="method" value="EM"/>
    <property type="resolution" value="2.74 A"/>
    <property type="chains" value="E=1-91"/>
</dbReference>
<dbReference type="PDB" id="8K58">
    <property type="method" value="EM"/>
    <property type="resolution" value="3.15 A"/>
    <property type="chains" value="E=2-77"/>
</dbReference>
<dbReference type="PDB" id="8K59">
    <property type="method" value="EM"/>
    <property type="resolution" value="3.50 A"/>
    <property type="chains" value="E=2-77"/>
</dbReference>
<dbReference type="PDB" id="8K5A">
    <property type="method" value="EM"/>
    <property type="resolution" value="3.30 A"/>
    <property type="chains" value="E=2-77"/>
</dbReference>
<dbReference type="PDB" id="8PBL">
    <property type="method" value="EM"/>
    <property type="resolution" value="2.87 A"/>
    <property type="chains" value="H=1-91"/>
</dbReference>
<dbReference type="PDB" id="8PDY">
    <property type="method" value="EM"/>
    <property type="resolution" value="2.80 A"/>
    <property type="chains" value="K=1-91"/>
</dbReference>
<dbReference type="PDB" id="8PEN">
    <property type="method" value="EM"/>
    <property type="resolution" value="3.10 A"/>
    <property type="chains" value="K=1-91"/>
</dbReference>
<dbReference type="PDB" id="8PFG">
    <property type="method" value="EM"/>
    <property type="resolution" value="3.10 A"/>
    <property type="chains" value="K=1-91"/>
</dbReference>
<dbReference type="PDB" id="8PFJ">
    <property type="method" value="EM"/>
    <property type="resolution" value="3.40 A"/>
    <property type="chains" value="K=1-91"/>
</dbReference>
<dbReference type="PDB" id="8PH9">
    <property type="method" value="EM"/>
    <property type="resolution" value="3.00 A"/>
    <property type="chains" value="K=1-91"/>
</dbReference>
<dbReference type="PDB" id="8PHK">
    <property type="method" value="EM"/>
    <property type="resolution" value="3.10 A"/>
    <property type="chains" value="K=1-91"/>
</dbReference>
<dbReference type="PDB" id="8PIB">
    <property type="method" value="EM"/>
    <property type="resolution" value="2.60 A"/>
    <property type="chains" value="K=1-91"/>
</dbReference>
<dbReference type="PDB" id="8PID">
    <property type="method" value="EM"/>
    <property type="resolution" value="3.00 A"/>
    <property type="chains" value="K=1-91"/>
</dbReference>
<dbReference type="PDB" id="8PIL">
    <property type="method" value="EM"/>
    <property type="resolution" value="3.20 A"/>
    <property type="chains" value="K=1-91"/>
</dbReference>
<dbReference type="PDB" id="8PIM">
    <property type="method" value="EM"/>
    <property type="resolution" value="3.40 A"/>
    <property type="chains" value="K=1-91"/>
</dbReference>
<dbReference type="PDB" id="8RE4">
    <property type="method" value="EM"/>
    <property type="resolution" value="2.80 A"/>
    <property type="chains" value="E=2-75"/>
</dbReference>
<dbReference type="PDB" id="8REA">
    <property type="method" value="EM"/>
    <property type="resolution" value="3.40 A"/>
    <property type="chains" value="E=2-75"/>
</dbReference>
<dbReference type="PDB" id="8REB">
    <property type="method" value="EM"/>
    <property type="resolution" value="3.40 A"/>
    <property type="chains" value="E=2-75"/>
</dbReference>
<dbReference type="PDB" id="8REC">
    <property type="method" value="EM"/>
    <property type="resolution" value="3.50 A"/>
    <property type="chains" value="E=2-75"/>
</dbReference>
<dbReference type="PDB" id="8RED">
    <property type="method" value="EM"/>
    <property type="resolution" value="3.90 A"/>
    <property type="chains" value="E=2-75"/>
</dbReference>
<dbReference type="PDB" id="8REE">
    <property type="method" value="EM"/>
    <property type="resolution" value="3.80 A"/>
    <property type="chains" value="E=2-75"/>
</dbReference>
<dbReference type="PDB" id="8SY5">
    <property type="method" value="EM"/>
    <property type="resolution" value="2.70 A"/>
    <property type="chains" value="K=1-91"/>
</dbReference>
<dbReference type="PDB" id="8SY6">
    <property type="method" value="EM"/>
    <property type="resolution" value="3.28 A"/>
    <property type="chains" value="K=1-91"/>
</dbReference>
<dbReference type="PDB" id="8SY7">
    <property type="method" value="EM"/>
    <property type="resolution" value="2.65 A"/>
    <property type="chains" value="K=1-91"/>
</dbReference>
<dbReference type="PDB" id="8TO1">
    <property type="method" value="EM"/>
    <property type="resolution" value="2.80 A"/>
    <property type="chains" value="K=1-91"/>
</dbReference>
<dbReference type="PDB" id="8TO6">
    <property type="method" value="EM"/>
    <property type="resolution" value="2.90 A"/>
    <property type="chains" value="K=1-91"/>
</dbReference>
<dbReference type="PDB" id="8TO8">
    <property type="method" value="EM"/>
    <property type="resolution" value="2.90 A"/>
    <property type="chains" value="K=1-91"/>
</dbReference>
<dbReference type="PDB" id="8TOE">
    <property type="method" value="EM"/>
    <property type="resolution" value="2.90 A"/>
    <property type="chains" value="K=1-91"/>
</dbReference>
<dbReference type="PDB" id="8TOM">
    <property type="method" value="EM"/>
    <property type="resolution" value="3.10 A"/>
    <property type="chains" value="K=1-91"/>
</dbReference>
<dbReference type="PDB" id="8U3B">
    <property type="method" value="EM"/>
    <property type="resolution" value="3.23 A"/>
    <property type="chains" value="E=1-91"/>
</dbReference>
<dbReference type="PDB" id="8UPR">
    <property type="method" value="EM"/>
    <property type="resolution" value="5.30 A"/>
    <property type="chains" value="AF=1-91"/>
</dbReference>
<dbReference type="PDB" id="8UQL">
    <property type="method" value="EM"/>
    <property type="resolution" value="3.20 A"/>
    <property type="chains" value="AF=1-91"/>
</dbReference>
<dbReference type="PDB" id="8UQM">
    <property type="method" value="EM"/>
    <property type="resolution" value="5.30 A"/>
    <property type="chains" value="AF=1-91"/>
</dbReference>
<dbReference type="PDB" id="8UQP">
    <property type="method" value="EM"/>
    <property type="resolution" value="3.80 A"/>
    <property type="chains" value="AF=1-91"/>
</dbReference>
<dbReference type="PDB" id="8UR0">
    <property type="method" value="EM"/>
    <property type="resolution" value="3.40 A"/>
    <property type="chains" value="AF=1-91"/>
</dbReference>
<dbReference type="PDB" id="8URH">
    <property type="method" value="EM"/>
    <property type="resolution" value="5.70 A"/>
    <property type="chains" value="AF=1-91"/>
</dbReference>
<dbReference type="PDB" id="8URI">
    <property type="method" value="EM"/>
    <property type="resolution" value="5.30 A"/>
    <property type="chains" value="AF=1-91"/>
</dbReference>
<dbReference type="PDB" id="8URX">
    <property type="method" value="EM"/>
    <property type="resolution" value="6.60 A"/>
    <property type="chains" value="AF=1-91"/>
</dbReference>
<dbReference type="PDB" id="8URY">
    <property type="method" value="EM"/>
    <property type="resolution" value="3.10 A"/>
    <property type="chains" value="AF=1-91"/>
</dbReference>
<dbReference type="PDB" id="8Y6U">
    <property type="method" value="EM"/>
    <property type="resolution" value="3.97 A"/>
    <property type="chains" value="E=1-91"/>
</dbReference>
<dbReference type="PDB" id="9DR1">
    <property type="method" value="EM"/>
    <property type="resolution" value="3.70 A"/>
    <property type="chains" value="K=2-80"/>
</dbReference>
<dbReference type="PDB" id="9GUR">
    <property type="method" value="EM"/>
    <property type="resolution" value="4.20 A"/>
    <property type="chains" value="5=4-74"/>
</dbReference>
<dbReference type="PDB" id="9GUW">
    <property type="method" value="EM"/>
    <property type="resolution" value="3.10 A"/>
    <property type="chains" value="5=1-91"/>
</dbReference>
<dbReference type="PDB" id="9GUX">
    <property type="method" value="EM"/>
    <property type="resolution" value="3.30 A"/>
    <property type="chains" value="5=1-91"/>
</dbReference>
<dbReference type="PDB" id="9Q96">
    <property type="method" value="EM"/>
    <property type="resolution" value="4.60 A"/>
    <property type="chains" value="E=1-91"/>
</dbReference>
<dbReference type="PDBsum" id="3IYD"/>
<dbReference type="PDBsum" id="3LU0"/>
<dbReference type="PDBsum" id="4JK1"/>
<dbReference type="PDBsum" id="4JK2"/>
<dbReference type="PDBsum" id="4KMU"/>
<dbReference type="PDBsum" id="4KN4"/>
<dbReference type="PDBsum" id="4KN7"/>
<dbReference type="PDBsum" id="4MEX"/>
<dbReference type="PDBsum" id="4MEY"/>
<dbReference type="PDBsum" id="4XSX"/>
<dbReference type="PDBsum" id="4XSY"/>
<dbReference type="PDBsum" id="4XSZ"/>
<dbReference type="PDBsum" id="4YG2"/>
<dbReference type="PDBsum" id="4YLN"/>
<dbReference type="PDBsum" id="4YLO"/>
<dbReference type="PDBsum" id="4YLP"/>
<dbReference type="PDBsum" id="4ZH2"/>
<dbReference type="PDBsum" id="4ZH3"/>
<dbReference type="PDBsum" id="4ZH4"/>
<dbReference type="PDBsum" id="5EZK"/>
<dbReference type="PDBsum" id="5IPL"/>
<dbReference type="PDBsum" id="5IPM"/>
<dbReference type="PDBsum" id="5IPN"/>
<dbReference type="PDBsum" id="5MS0"/>
<dbReference type="PDBsum" id="5MY1"/>
<dbReference type="PDBsum" id="5NSR"/>
<dbReference type="PDBsum" id="5NSS"/>
<dbReference type="PDBsum" id="5NWT"/>
<dbReference type="PDBsum" id="5UAC"/>
<dbReference type="PDBsum" id="5UAG"/>
<dbReference type="PDBsum" id="5UAH"/>
<dbReference type="PDBsum" id="5UAJ"/>
<dbReference type="PDBsum" id="5UAL"/>
<dbReference type="PDBsum" id="5UAQ"/>
<dbReference type="PDBsum" id="5UI8"/>
<dbReference type="PDBsum" id="5VSW"/>
<dbReference type="PDBsum" id="5VT0"/>
<dbReference type="PDBsum" id="5W1S"/>
<dbReference type="PDBsum" id="5W1T"/>
<dbReference type="PDBsum" id="6ALF"/>
<dbReference type="PDBsum" id="6ALG"/>
<dbReference type="PDBsum" id="6ALH"/>
<dbReference type="PDBsum" id="6ASX"/>
<dbReference type="PDBsum" id="6AWB"/>
<dbReference type="PDBsum" id="6AWC"/>
<dbReference type="PDBsum" id="6AWD"/>
<dbReference type="PDBsum" id="6B6H"/>
<dbReference type="PDBsum" id="6BJS"/>
<dbReference type="PDBsum" id="6BYU"/>
<dbReference type="PDBsum" id="6C6S"/>
<dbReference type="PDBsum" id="6C6T"/>
<dbReference type="PDBsum" id="6C6U"/>
<dbReference type="PDBsum" id="6C9Y"/>
<dbReference type="PDBsum" id="6CA0"/>
<dbReference type="PDBsum" id="6CUX"/>
<dbReference type="PDBsum" id="6FLP"/>
<dbReference type="PDBsum" id="6FLQ"/>
<dbReference type="PDBsum" id="6GFW"/>
<dbReference type="PDBsum" id="6GH5"/>
<dbReference type="PDBsum" id="6GH6"/>
<dbReference type="PDBsum" id="6GOV"/>
<dbReference type="PDBsum" id="6JBQ"/>
<dbReference type="PDBsum" id="6JNX"/>
<dbReference type="PDBsum" id="6K4Y"/>
<dbReference type="PDBsum" id="6KJ6"/>
<dbReference type="PDBsum" id="6LDI"/>
<dbReference type="PDBsum" id="6N4C"/>
<dbReference type="PDBsum" id="6N57"/>
<dbReference type="PDBsum" id="6N58"/>
<dbReference type="PDBsum" id="6N60"/>
<dbReference type="PDBsum" id="6N61"/>
<dbReference type="PDBsum" id="6N62"/>
<dbReference type="PDBsum" id="6OMF"/>
<dbReference type="PDBsum" id="6OUL"/>
<dbReference type="PDBsum" id="6P18"/>
<dbReference type="PDBsum" id="6P19"/>
<dbReference type="PDBsum" id="6P1K"/>
<dbReference type="PDBsum" id="6PB4"/>
<dbReference type="PDBsum" id="6PB5"/>
<dbReference type="PDBsum" id="6PB6"/>
<dbReference type="PDBsum" id="6PMI"/>
<dbReference type="PDBsum" id="6PMJ"/>
<dbReference type="PDBsum" id="6PSQ"/>
<dbReference type="PDBsum" id="6PSR"/>
<dbReference type="PDBsum" id="6PSS"/>
<dbReference type="PDBsum" id="6PST"/>
<dbReference type="PDBsum" id="6PSU"/>
<dbReference type="PDBsum" id="6PSV"/>
<dbReference type="PDBsum" id="6PSW"/>
<dbReference type="PDBsum" id="6R9B"/>
<dbReference type="PDBsum" id="6R9G"/>
<dbReference type="PDBsum" id="6RI7"/>
<dbReference type="PDBsum" id="6RI9"/>
<dbReference type="PDBsum" id="6RIN"/>
<dbReference type="PDBsum" id="6RIP"/>
<dbReference type="PDBsum" id="6TQN"/>
<dbReference type="PDBsum" id="6TQO"/>
<dbReference type="PDBsum" id="6UTV"/>
<dbReference type="PDBsum" id="6UTW"/>
<dbReference type="PDBsum" id="6UTX"/>
<dbReference type="PDBsum" id="6UTY"/>
<dbReference type="PDBsum" id="6UTZ"/>
<dbReference type="PDBsum" id="6UU0"/>
<dbReference type="PDBsum" id="6UU1"/>
<dbReference type="PDBsum" id="6UU2"/>
<dbReference type="PDBsum" id="6UU3"/>
<dbReference type="PDBsum" id="6UU4"/>
<dbReference type="PDBsum" id="6UU5"/>
<dbReference type="PDBsum" id="6UU6"/>
<dbReference type="PDBsum" id="6UU7"/>
<dbReference type="PDBsum" id="6UU8"/>
<dbReference type="PDBsum" id="6UU9"/>
<dbReference type="PDBsum" id="6UUA"/>
<dbReference type="PDBsum" id="6UUB"/>
<dbReference type="PDBsum" id="6UUC"/>
<dbReference type="PDBsum" id="6VJS"/>
<dbReference type="PDBsum" id="6VYU"/>
<dbReference type="PDBsum" id="6VYW"/>
<dbReference type="PDBsum" id="6VYX"/>
<dbReference type="PDBsum" id="6VYY"/>
<dbReference type="PDBsum" id="6VYZ"/>
<dbReference type="PDBsum" id="6VZ2"/>
<dbReference type="PDBsum" id="6VZ3"/>
<dbReference type="PDBsum" id="6VZ5"/>
<dbReference type="PDBsum" id="6VZ7"/>
<dbReference type="PDBsum" id="6WMU"/>
<dbReference type="PDBsum" id="6X26"/>
<dbReference type="PDBsum" id="6X2F"/>
<dbReference type="PDBsum" id="6X2N"/>
<dbReference type="PDBsum" id="6X43"/>
<dbReference type="PDBsum" id="6X4W"/>
<dbReference type="PDBsum" id="6X4Y"/>
<dbReference type="PDBsum" id="6X50"/>
<dbReference type="PDBsum" id="6X6T"/>
<dbReference type="PDBsum" id="6X7F"/>
<dbReference type="PDBsum" id="6X7K"/>
<dbReference type="PDBsum" id="6X9Q"/>
<dbReference type="PDBsum" id="6XAS"/>
<dbReference type="PDBsum" id="6XAV"/>
<dbReference type="PDBsum" id="6XDQ"/>
<dbReference type="PDBsum" id="6XDR"/>
<dbReference type="PDBsum" id="6XGF"/>
<dbReference type="PDBsum" id="6XH7"/>
<dbReference type="PDBsum" id="6XH8"/>
<dbReference type="PDBsum" id="6XII"/>
<dbReference type="PDBsum" id="6XL5"/>
<dbReference type="PDBsum" id="6XLJ"/>
<dbReference type="PDBsum" id="6XLL"/>
<dbReference type="PDBsum" id="6XLM"/>
<dbReference type="PDBsum" id="6XLN"/>
<dbReference type="PDBsum" id="6Z9P"/>
<dbReference type="PDBsum" id="6Z9Q"/>
<dbReference type="PDBsum" id="6Z9R"/>
<dbReference type="PDBsum" id="6Z9S"/>
<dbReference type="PDBsum" id="6Z9T"/>
<dbReference type="PDBsum" id="6ZTJ"/>
<dbReference type="PDBsum" id="6ZTL"/>
<dbReference type="PDBsum" id="6ZTN"/>
<dbReference type="PDBsum" id="6ZTO"/>
<dbReference type="PDBsum" id="6ZTP"/>
<dbReference type="PDBsum" id="6ZU1"/>
<dbReference type="PDBsum" id="7ADB"/>
<dbReference type="PDBsum" id="7ADC"/>
<dbReference type="PDBsum" id="7ADD"/>
<dbReference type="PDBsum" id="7ADE"/>
<dbReference type="PDBsum" id="7BEF"/>
<dbReference type="PDBsum" id="7BEG"/>
<dbReference type="PDBsum" id="7C17"/>
<dbReference type="PDBsum" id="7C97"/>
<dbReference type="PDBsum" id="7CHW"/>
<dbReference type="PDBsum" id="7DY6"/>
<dbReference type="PDBsum" id="7KHB"/>
<dbReference type="PDBsum" id="7KHC"/>
<dbReference type="PDBsum" id="7KHE"/>
<dbReference type="PDBsum" id="7KHI"/>
<dbReference type="PDBsum" id="7M8E"/>
<dbReference type="PDBsum" id="7MKD"/>
<dbReference type="PDBsum" id="7MKE"/>
<dbReference type="PDBsum" id="7MKI"/>
<dbReference type="PDBsum" id="7MKJ"/>
<dbReference type="PDBsum" id="7MKN"/>
<dbReference type="PDBsum" id="7MKO"/>
<dbReference type="PDBsum" id="7MKP"/>
<dbReference type="PDBsum" id="7MKQ"/>
<dbReference type="PDBsum" id="7N4E"/>
<dbReference type="PDBsum" id="7PY0"/>
<dbReference type="PDBsum" id="7PY1"/>
<dbReference type="PDBsum" id="7PY3"/>
<dbReference type="PDBsum" id="7PY5"/>
<dbReference type="PDBsum" id="7PY6"/>
<dbReference type="PDBsum" id="7PY7"/>
<dbReference type="PDBsum" id="7PY8"/>
<dbReference type="PDBsum" id="7PYJ"/>
<dbReference type="PDBsum" id="7PYK"/>
<dbReference type="PDBsum" id="7Q0J"/>
<dbReference type="PDBsum" id="7Q0K"/>
<dbReference type="PDBsum" id="7QV9"/>
<dbReference type="PDBsum" id="7QWP"/>
<dbReference type="PDBsum" id="7QXI"/>
<dbReference type="PDBsum" id="7SZJ"/>
<dbReference type="PDBsum" id="7SZK"/>
<dbReference type="PDBsum" id="7UBM"/>
<dbReference type="PDBsum" id="7UBN"/>
<dbReference type="PDBsum" id="7UWE"/>
<dbReference type="PDBsum" id="7UWH"/>
<dbReference type="PDBsum" id="7VWY"/>
<dbReference type="PDBsum" id="7VWZ"/>
<dbReference type="PDBsum" id="7W5W"/>
<dbReference type="PDBsum" id="7W5X"/>
<dbReference type="PDBsum" id="7W5Y"/>
<dbReference type="PDBsum" id="7XUE"/>
<dbReference type="PDBsum" id="7XUG"/>
<dbReference type="PDBsum" id="7XUI"/>
<dbReference type="PDBsum" id="7YP9"/>
<dbReference type="PDBsum" id="7YPA"/>
<dbReference type="PDBsum" id="7YPB"/>
<dbReference type="PDBsum" id="8ABY"/>
<dbReference type="PDBsum" id="8ABZ"/>
<dbReference type="PDBsum" id="8AC0"/>
<dbReference type="PDBsum" id="8AC1"/>
<dbReference type="PDBsum" id="8AC2"/>
<dbReference type="PDBsum" id="8ACP"/>
<dbReference type="PDBsum" id="8AD1"/>
<dbReference type="PDBsum" id="8E3F"/>
<dbReference type="PDBsum" id="8E5K"/>
<dbReference type="PDBsum" id="8E5O"/>
<dbReference type="PDBsum" id="8E6X"/>
<dbReference type="PDBsum" id="8E6Z"/>
<dbReference type="PDBsum" id="8EG7"/>
<dbReference type="PDBsum" id="8EG8"/>
<dbReference type="PDBsum" id="8EGB"/>
<dbReference type="PDBsum" id="8EH8"/>
<dbReference type="PDBsum" id="8EH9"/>
<dbReference type="PDBsum" id="8EHA"/>
<dbReference type="PDBsum" id="8EHF"/>
<dbReference type="PDBsum" id="8EHI"/>
<dbReference type="PDBsum" id="8F1I"/>
<dbReference type="PDBsum" id="8F1J"/>
<dbReference type="PDBsum" id="8F1K"/>
<dbReference type="PDBsum" id="8F3C"/>
<dbReference type="PDBsum" id="8FIX"/>
<dbReference type="PDBsum" id="8FTD"/>
<dbReference type="PDBsum" id="8FVR"/>
<dbReference type="PDBsum" id="8FVW"/>
<dbReference type="PDBsum" id="8G00"/>
<dbReference type="PDBsum" id="8G1S"/>
<dbReference type="PDBsum" id="8G2W"/>
<dbReference type="PDBsum" id="8G4W"/>
<dbReference type="PDBsum" id="8G7E"/>
<dbReference type="PDBsum" id="8G8Z"/>
<dbReference type="PDBsum" id="8IGR"/>
<dbReference type="PDBsum" id="8IGS"/>
<dbReference type="PDBsum" id="8JO2"/>
<dbReference type="PDBsum" id="8K58"/>
<dbReference type="PDBsum" id="8K59"/>
<dbReference type="PDBsum" id="8K5A"/>
<dbReference type="PDBsum" id="8PBL"/>
<dbReference type="PDBsum" id="8PDY"/>
<dbReference type="PDBsum" id="8PEN"/>
<dbReference type="PDBsum" id="8PFG"/>
<dbReference type="PDBsum" id="8PFJ"/>
<dbReference type="PDBsum" id="8PH9"/>
<dbReference type="PDBsum" id="8PHK"/>
<dbReference type="PDBsum" id="8PIB"/>
<dbReference type="PDBsum" id="8PID"/>
<dbReference type="PDBsum" id="8PIL"/>
<dbReference type="PDBsum" id="8PIM"/>
<dbReference type="PDBsum" id="8RE4"/>
<dbReference type="PDBsum" id="8REA"/>
<dbReference type="PDBsum" id="8REB"/>
<dbReference type="PDBsum" id="8REC"/>
<dbReference type="PDBsum" id="8RED"/>
<dbReference type="PDBsum" id="8REE"/>
<dbReference type="PDBsum" id="8SY5"/>
<dbReference type="PDBsum" id="8SY6"/>
<dbReference type="PDBsum" id="8SY7"/>
<dbReference type="PDBsum" id="8TO1"/>
<dbReference type="PDBsum" id="8TO6"/>
<dbReference type="PDBsum" id="8TO8"/>
<dbReference type="PDBsum" id="8TOE"/>
<dbReference type="PDBsum" id="8TOM"/>
<dbReference type="PDBsum" id="8U3B"/>
<dbReference type="PDBsum" id="8UPR"/>
<dbReference type="PDBsum" id="8UQL"/>
<dbReference type="PDBsum" id="8UQM"/>
<dbReference type="PDBsum" id="8UQP"/>
<dbReference type="PDBsum" id="8UR0"/>
<dbReference type="PDBsum" id="8URH"/>
<dbReference type="PDBsum" id="8URI"/>
<dbReference type="PDBsum" id="8URX"/>
<dbReference type="PDBsum" id="8URY"/>
<dbReference type="PDBsum" id="8Y6U"/>
<dbReference type="PDBsum" id="9DR1"/>
<dbReference type="PDBsum" id="9GUR"/>
<dbReference type="PDBsum" id="9GUW"/>
<dbReference type="PDBsum" id="9GUX"/>
<dbReference type="PDBsum" id="9Q96"/>
<dbReference type="EMDB" id="EMD-0001"/>
<dbReference type="EMDB" id="EMD-0002"/>
<dbReference type="EMDB" id="EMD-0340"/>
<dbReference type="EMDB" id="EMD-0348"/>
<dbReference type="EMDB" id="EMD-0349"/>
<dbReference type="EMDB" id="EMD-0700"/>
<dbReference type="EMDB" id="EMD-0874"/>
<dbReference type="EMDB" id="EMD-11418"/>
<dbReference type="EMDB" id="EMD-11419"/>
<dbReference type="EMDB" id="EMD-11421"/>
<dbReference type="EMDB" id="EMD-11422"/>
<dbReference type="EMDB" id="EMD-11423"/>
<dbReference type="EMDB" id="EMD-11426"/>
<dbReference type="EMDB" id="EMD-11722"/>
<dbReference type="EMDB" id="EMD-11723"/>
<dbReference type="EMDB" id="EMD-11724"/>
<dbReference type="EMDB" id="EMD-11725"/>
<dbReference type="EMDB" id="EMD-12156"/>
<dbReference type="EMDB" id="EMD-12157"/>
<dbReference type="EMDB" id="EMD-13706"/>
<dbReference type="EMDB" id="EMD-13707"/>
<dbReference type="EMDB" id="EMD-13709"/>
<dbReference type="EMDB" id="EMD-13713"/>
<dbReference type="EMDB" id="EMD-13714"/>
<dbReference type="EMDB" id="EMD-13715"/>
<dbReference type="EMDB" id="EMD-13716"/>
<dbReference type="EMDB" id="EMD-13717"/>
<dbReference type="EMDB" id="EMD-13718"/>
<dbReference type="EMDB" id="EMD-13745"/>
<dbReference type="EMDB" id="EMD-13746"/>
<dbReference type="EMDB" id="EMD-14171"/>
<dbReference type="EMDB" id="EMD-14190"/>
<dbReference type="EMDB" id="EMD-14200"/>
<dbReference type="EMDB" id="EMD-15327"/>
<dbReference type="EMDB" id="EMD-15328"/>
<dbReference type="EMDB" id="EMD-15329"/>
<dbReference type="EMDB" id="EMD-15330"/>
<dbReference type="EMDB" id="EMD-15331"/>
<dbReference type="EMDB" id="EMD-15352"/>
<dbReference type="EMDB" id="EMD-15357"/>
<dbReference type="EMDB" id="EMD-17586"/>
<dbReference type="EMDB" id="EMD-17626"/>
<dbReference type="EMDB" id="EMD-17632"/>
<dbReference type="EMDB" id="EMD-17646"/>
<dbReference type="EMDB" id="EMD-17647"/>
<dbReference type="EMDB" id="EMD-17657"/>
<dbReference type="EMDB" id="EMD-17668"/>
<dbReference type="EMDB" id="EMD-17679"/>
<dbReference type="EMDB" id="EMD-17681"/>
<dbReference type="EMDB" id="EMD-17685"/>
<dbReference type="EMDB" id="EMD-17686"/>
<dbReference type="EMDB" id="EMD-19079"/>
<dbReference type="EMDB" id="EMD-19080"/>
<dbReference type="EMDB" id="EMD-19081"/>
<dbReference type="EMDB" id="EMD-19082"/>
<dbReference type="EMDB" id="EMD-19083"/>
<dbReference type="EMDB" id="EMD-19084"/>
<dbReference type="EMDB" id="EMD-20090"/>
<dbReference type="EMDB" id="EMD-20233"/>
<dbReference type="EMDB" id="EMD-20234"/>
<dbReference type="EMDB" id="EMD-21879"/>
<dbReference type="EMDB" id="EMD-21881"/>
<dbReference type="EMDB" id="EMD-21883"/>
<dbReference type="EMDB" id="EMD-22114"/>
<dbReference type="EMDB" id="EMD-22115"/>
<dbReference type="EMDB" id="EMD-23900"/>
<dbReference type="EMDB" id="EMD-23901"/>
<dbReference type="EMDB" id="EMD-23902"/>
<dbReference type="EMDB" id="EMD-23903"/>
<dbReference type="EMDB" id="EMD-25570"/>
<dbReference type="EMDB" id="EMD-25571"/>
<dbReference type="EMDB" id="EMD-28783"/>
<dbReference type="EMDB" id="EMD-28786"/>
<dbReference type="EMDB" id="EMD-28792"/>
<dbReference type="EMDB" id="EMD-29212"/>
<dbReference type="EMDB" id="EMD-29423"/>
<dbReference type="EMDB" id="EMD-29491"/>
<dbReference type="EMDB" id="EMD-29494"/>
<dbReference type="EMDB" id="EMD-29640"/>
<dbReference type="EMDB" id="EMD-29683"/>
<dbReference type="EMDB" id="EMD-30268"/>
<dbReference type="EMDB" id="EMD-32165"/>
<dbReference type="EMDB" id="EMD-32166"/>
<dbReference type="EMDB" id="EMD-32322"/>
<dbReference type="EMDB" id="EMD-32323"/>
<dbReference type="EMDB" id="EMD-32324"/>
<dbReference type="EMDB" id="EMD-33466"/>
<dbReference type="EMDB" id="EMD-33468"/>
<dbReference type="EMDB" id="EMD-33470"/>
<dbReference type="EMDB" id="EMD-33996"/>
<dbReference type="EMDB" id="EMD-33997"/>
<dbReference type="EMDB" id="EMD-33998"/>
<dbReference type="EMDB" id="EMD-35438"/>
<dbReference type="EMDB" id="EMD-35439"/>
<dbReference type="EMDB" id="EMD-3561"/>
<dbReference type="EMDB" id="EMD-36453"/>
<dbReference type="EMDB" id="EMD-36897"/>
<dbReference type="EMDB" id="EMD-36898"/>
<dbReference type="EMDB" id="EMD-36899"/>
<dbReference type="EMDB" id="EMD-3695"/>
<dbReference type="EMDB" id="EMD-3696"/>
<dbReference type="EMDB" id="EMD-39001"/>
<dbReference type="EMDB" id="EMD-40862"/>
<dbReference type="EMDB" id="EMD-40863"/>
<dbReference type="EMDB" id="EMD-41433"/>
<dbReference type="EMDB" id="EMD-41437"/>
<dbReference type="EMDB" id="EMD-41439"/>
<dbReference type="EMDB" id="EMD-41448"/>
<dbReference type="EMDB" id="EMD-41456"/>
<dbReference type="EMDB" id="EMD-41856"/>
<dbReference type="EMDB" id="EMD-42454"/>
<dbReference type="EMDB" id="EMD-42473"/>
<dbReference type="EMDB" id="EMD-42474"/>
<dbReference type="EMDB" id="EMD-42477"/>
<dbReference type="EMDB" id="EMD-42479"/>
<dbReference type="EMDB" id="EMD-42492"/>
<dbReference type="EMDB" id="EMD-42493"/>
<dbReference type="EMDB" id="EMD-42503"/>
<dbReference type="EMDB" id="EMD-42504"/>
<dbReference type="EMDB" id="EMD-4274"/>
<dbReference type="EMDB" id="EMD-4275"/>
<dbReference type="EMDB" id="EMD-4397"/>
<dbReference type="EMDB" id="EMD-4770"/>
<dbReference type="EMDB" id="EMD-4885"/>
<dbReference type="EMDB" id="EMD-4886"/>
<dbReference type="EMDB" id="EMD-4892"/>
<dbReference type="EMDB" id="EMD-4893"/>
<dbReference type="EMDB" id="EMD-51617"/>
<dbReference type="EMDB" id="EMD-51622"/>
<dbReference type="EMDB" id="EMD-51623"/>
<dbReference type="EMDB" id="EMD-52919"/>
<dbReference type="EMDB" id="EMD-7002"/>
<dbReference type="EMDB" id="EMD-7103"/>
<dbReference type="EMDB" id="EMD-7349"/>
<dbReference type="EMDB" id="EMD-7350"/>
<dbReference type="EMDB" id="EMD-7351"/>
<dbReference type="EMDB" id="EMD-7438"/>
<dbReference type="EMDB" id="EMD-7439"/>
<dbReference type="EMDB" id="EMD-8584"/>
<dbReference type="EMDB" id="EMD-8586"/>
<dbReference type="EMDB" id="EMD-8732"/>
<dbReference type="EMDB" id="EMD-9792"/>
<dbReference type="EMDB" id="EMD-9852"/>
<dbReference type="EMDB" id="EMD-9916"/>
<dbReference type="SMR" id="P0A800"/>
<dbReference type="BioGRID" id="4259347">
    <property type="interactions" value="292"/>
</dbReference>
<dbReference type="BioGRID" id="852467">
    <property type="interactions" value="1"/>
</dbReference>
<dbReference type="ComplexPortal" id="CPX-4881">
    <property type="entry name" value="DNA-directed RNA polymerase holoenzyme complex, Sigma70 variant"/>
</dbReference>
<dbReference type="ComplexPortal" id="CPX-4883">
    <property type="entry name" value="DNA-directed RNA polymerase holoenzyme complex, SigmaS variant"/>
</dbReference>
<dbReference type="ComplexPortal" id="CPX-4884">
    <property type="entry name" value="DNA-directed RNA polymerase holoenzyme complex, Sigma54 variant"/>
</dbReference>
<dbReference type="ComplexPortal" id="CPX-4885">
    <property type="entry name" value="DNA-directed RNA polymerase holoenzyme complex, SigmaE variant"/>
</dbReference>
<dbReference type="ComplexPortal" id="CPX-4886">
    <property type="entry name" value="DNA-directed RNA polymerase holoenzyme complex, SigmaF variant"/>
</dbReference>
<dbReference type="ComplexPortal" id="CPX-4887">
    <property type="entry name" value="DNA-directed RNA polymerase holoenzyme complex, SigmaH variant"/>
</dbReference>
<dbReference type="ComplexPortal" id="CPX-4888">
    <property type="entry name" value="DNA-directed RNA polymerase holoenzyme complex, Sigma fecI variant"/>
</dbReference>
<dbReference type="ComplexPortal" id="CPX-5674">
    <property type="entry name" value="Transcription elongation complex"/>
</dbReference>
<dbReference type="ComplexPortal" id="CPX-5780">
    <property type="entry name" value="lambdaN-dependent processive transcription antitermination complex"/>
</dbReference>
<dbReference type="DIP" id="DIP-31837N"/>
<dbReference type="FunCoup" id="P0A800">
    <property type="interactions" value="268"/>
</dbReference>
<dbReference type="IntAct" id="P0A800">
    <property type="interactions" value="27"/>
</dbReference>
<dbReference type="STRING" id="511145.b3649"/>
<dbReference type="BindingDB" id="P0A800"/>
<dbReference type="ChEMBL" id="CHEMBL2364672"/>
<dbReference type="ChEMBL" id="CHEMBL4296169"/>
<dbReference type="DrugCentral" id="P0A800"/>
<dbReference type="jPOST" id="P0A800"/>
<dbReference type="PaxDb" id="511145-b3649"/>
<dbReference type="EnsemblBacteria" id="AAC76673">
    <property type="protein sequence ID" value="AAC76673"/>
    <property type="gene ID" value="b3649"/>
</dbReference>
<dbReference type="GeneID" id="948160"/>
<dbReference type="GeneID" id="98390719"/>
<dbReference type="KEGG" id="ecj:JW3624"/>
<dbReference type="KEGG" id="eco:b3649"/>
<dbReference type="KEGG" id="ecoc:C3026_19770"/>
<dbReference type="PATRIC" id="fig|511145.12.peg.3769"/>
<dbReference type="EchoBASE" id="EB0892"/>
<dbReference type="eggNOG" id="COG1758">
    <property type="taxonomic scope" value="Bacteria"/>
</dbReference>
<dbReference type="HOGENOM" id="CLU_125406_5_3_6"/>
<dbReference type="InParanoid" id="P0A800"/>
<dbReference type="OMA" id="NVDNRFQ"/>
<dbReference type="OrthoDB" id="9796300at2"/>
<dbReference type="PhylomeDB" id="P0A800"/>
<dbReference type="BioCyc" id="EcoCyc:EG10899-MONOMER"/>
<dbReference type="BRENDA" id="2.7.7.6">
    <property type="organism ID" value="2026"/>
</dbReference>
<dbReference type="EvolutionaryTrace" id="P0A800"/>
<dbReference type="PRO" id="PR:P0A800"/>
<dbReference type="Proteomes" id="UP000000625">
    <property type="component" value="Chromosome"/>
</dbReference>
<dbReference type="GO" id="GO:0005829">
    <property type="term" value="C:cytosol"/>
    <property type="evidence" value="ECO:0000314"/>
    <property type="project" value="EcoCyc"/>
</dbReference>
<dbReference type="GO" id="GO:0000345">
    <property type="term" value="C:cytosolic DNA-directed RNA polymerase complex"/>
    <property type="evidence" value="ECO:0000353"/>
    <property type="project" value="ComplexPortal"/>
</dbReference>
<dbReference type="GO" id="GO:0030880">
    <property type="term" value="C:RNA polymerase complex"/>
    <property type="evidence" value="ECO:0000315"/>
    <property type="project" value="EcoliWiki"/>
</dbReference>
<dbReference type="GO" id="GO:0008023">
    <property type="term" value="C:transcription elongation factor complex"/>
    <property type="evidence" value="ECO:0000303"/>
    <property type="project" value="ComplexPortal"/>
</dbReference>
<dbReference type="GO" id="GO:0001000">
    <property type="term" value="F:bacterial-type RNA polymerase core enzyme binding"/>
    <property type="evidence" value="ECO:0000315"/>
    <property type="project" value="EcoCyc"/>
</dbReference>
<dbReference type="GO" id="GO:0003677">
    <property type="term" value="F:DNA binding"/>
    <property type="evidence" value="ECO:0007669"/>
    <property type="project" value="UniProtKB-UniRule"/>
</dbReference>
<dbReference type="GO" id="GO:0003899">
    <property type="term" value="F:DNA-directed RNA polymerase activity"/>
    <property type="evidence" value="ECO:0007669"/>
    <property type="project" value="UniProtKB-UniRule"/>
</dbReference>
<dbReference type="GO" id="GO:0044780">
    <property type="term" value="P:bacterial-type flagellum assembly"/>
    <property type="evidence" value="ECO:0000303"/>
    <property type="project" value="ComplexPortal"/>
</dbReference>
<dbReference type="GO" id="GO:0071973">
    <property type="term" value="P:bacterial-type flagellum-dependent cell motility"/>
    <property type="evidence" value="ECO:0000303"/>
    <property type="project" value="ComplexPortal"/>
</dbReference>
<dbReference type="GO" id="GO:0048870">
    <property type="term" value="P:cell motility"/>
    <property type="evidence" value="ECO:0000303"/>
    <property type="project" value="ComplexPortal"/>
</dbReference>
<dbReference type="GO" id="GO:0036460">
    <property type="term" value="P:cellular response to cell envelope stress"/>
    <property type="evidence" value="ECO:0000303"/>
    <property type="project" value="ComplexPortal"/>
</dbReference>
<dbReference type="GO" id="GO:0006352">
    <property type="term" value="P:DNA-templated transcription initiation"/>
    <property type="evidence" value="ECO:0000314"/>
    <property type="project" value="ComplexPortal"/>
</dbReference>
<dbReference type="GO" id="GO:0006879">
    <property type="term" value="P:intracellular iron ion homeostasis"/>
    <property type="evidence" value="ECO:0000303"/>
    <property type="project" value="ComplexPortal"/>
</dbReference>
<dbReference type="GO" id="GO:0042128">
    <property type="term" value="P:nitrate assimilation"/>
    <property type="evidence" value="ECO:0000303"/>
    <property type="project" value="ComplexPortal"/>
</dbReference>
<dbReference type="GO" id="GO:0065003">
    <property type="term" value="P:protein-containing complex assembly"/>
    <property type="evidence" value="ECO:0000314"/>
    <property type="project" value="EcoCyc"/>
</dbReference>
<dbReference type="GO" id="GO:0032784">
    <property type="term" value="P:regulation of DNA-templated transcription elongation"/>
    <property type="evidence" value="ECO:0000303"/>
    <property type="project" value="ComplexPortal"/>
</dbReference>
<dbReference type="GO" id="GO:2000142">
    <property type="term" value="P:regulation of DNA-templated transcription initiation"/>
    <property type="evidence" value="ECO:0000314"/>
    <property type="project" value="ComplexPortal"/>
</dbReference>
<dbReference type="GO" id="GO:0009408">
    <property type="term" value="P:response to heat"/>
    <property type="evidence" value="ECO:0000303"/>
    <property type="project" value="ComplexPortal"/>
</dbReference>
<dbReference type="GO" id="GO:0090605">
    <property type="term" value="P:submerged biofilm formation"/>
    <property type="evidence" value="ECO:0000303"/>
    <property type="project" value="ComplexPortal"/>
</dbReference>
<dbReference type="GO" id="GO:0031564">
    <property type="term" value="P:transcription antitermination"/>
    <property type="evidence" value="ECO:0000314"/>
    <property type="project" value="ComplexPortal"/>
</dbReference>
<dbReference type="FunFam" id="3.90.940.10:FF:000001">
    <property type="entry name" value="DNA-directed RNA polymerase subunit omega"/>
    <property type="match status" value="1"/>
</dbReference>
<dbReference type="Gene3D" id="3.90.940.10">
    <property type="match status" value="1"/>
</dbReference>
<dbReference type="HAMAP" id="MF_00366">
    <property type="entry name" value="RNApol_bact_RpoZ"/>
    <property type="match status" value="1"/>
</dbReference>
<dbReference type="InterPro" id="IPR003716">
    <property type="entry name" value="DNA-dir_RNA_pol_omega"/>
</dbReference>
<dbReference type="InterPro" id="IPR006110">
    <property type="entry name" value="Pol_omega/Rpo6/RPB6"/>
</dbReference>
<dbReference type="InterPro" id="IPR036161">
    <property type="entry name" value="RPB6/omega-like_sf"/>
</dbReference>
<dbReference type="NCBIfam" id="TIGR00690">
    <property type="entry name" value="rpoZ"/>
    <property type="match status" value="1"/>
</dbReference>
<dbReference type="PANTHER" id="PTHR34476">
    <property type="entry name" value="DNA-DIRECTED RNA POLYMERASE SUBUNIT OMEGA"/>
    <property type="match status" value="1"/>
</dbReference>
<dbReference type="PANTHER" id="PTHR34476:SF1">
    <property type="entry name" value="DNA-DIRECTED RNA POLYMERASE SUBUNIT OMEGA"/>
    <property type="match status" value="1"/>
</dbReference>
<dbReference type="Pfam" id="PF01192">
    <property type="entry name" value="RNA_pol_Rpb6"/>
    <property type="match status" value="1"/>
</dbReference>
<dbReference type="SMART" id="SM01409">
    <property type="entry name" value="RNA_pol_Rpb6"/>
    <property type="match status" value="1"/>
</dbReference>
<dbReference type="SUPFAM" id="SSF63562">
    <property type="entry name" value="RPB6/omega subunit-like"/>
    <property type="match status" value="1"/>
</dbReference>
<accession>P0A800</accession>
<accession>P08374</accession>
<accession>Q2M7W2</accession>
<keyword id="KW-0002">3D-structure</keyword>
<keyword id="KW-0903">Direct protein sequencing</keyword>
<keyword id="KW-0240">DNA-directed RNA polymerase</keyword>
<keyword id="KW-0548">Nucleotidyltransferase</keyword>
<keyword id="KW-1185">Reference proteome</keyword>
<keyword id="KW-0804">Transcription</keyword>
<keyword id="KW-0808">Transferase</keyword>
<feature type="initiator methionine" description="Removed" evidence="4">
    <location>
        <position position="1"/>
    </location>
</feature>
<feature type="chain" id="PRO_0000128935" description="DNA-directed RNA polymerase subunit omega">
    <location>
        <begin position="2"/>
        <end position="91"/>
    </location>
</feature>
<feature type="turn" evidence="16">
    <location>
        <begin position="2"/>
        <end position="4"/>
    </location>
</feature>
<feature type="helix" evidence="15">
    <location>
        <begin position="7"/>
        <end position="13"/>
    </location>
</feature>
<feature type="helix" evidence="15">
    <location>
        <begin position="16"/>
        <end position="31"/>
    </location>
</feature>
<feature type="strand" evidence="12">
    <location>
        <begin position="32"/>
        <end position="34"/>
    </location>
</feature>
<feature type="helix" evidence="15">
    <location>
        <begin position="46"/>
        <end position="55"/>
    </location>
</feature>
<feature type="strand" evidence="13">
    <location>
        <begin position="57"/>
        <end position="59"/>
    </location>
</feature>
<feature type="helix" evidence="15">
    <location>
        <begin position="61"/>
        <end position="73"/>
    </location>
</feature>
<feature type="helix" evidence="14">
    <location>
        <begin position="77"/>
        <end position="79"/>
    </location>
</feature>
<feature type="helix" evidence="11">
    <location>
        <begin position="80"/>
        <end position="84"/>
    </location>
</feature>
<feature type="helix" evidence="11">
    <location>
        <begin position="85"/>
        <end position="89"/>
    </location>
</feature>
<reference key="1">
    <citation type="journal article" date="1986" name="Gene">
        <title>The cloning and sequence of the gene encoding the omega subunit of Escherichia coli RNA polymerase.</title>
        <authorList>
            <person name="Gentry D.R."/>
            <person name="Burgess R.R."/>
        </authorList>
    </citation>
    <scope>NUCLEOTIDE SEQUENCE [GENOMIC DNA]</scope>
</reference>
<reference key="2">
    <citation type="journal article" date="1989" name="J. Biol. Chem.">
        <title>Characterization of the spoT gene of Escherichia coli.</title>
        <authorList>
            <person name="Sarubbi E."/>
            <person name="Rudd K.E."/>
            <person name="Xiao H."/>
            <person name="Ikehara K."/>
            <person name="Kalman M."/>
            <person name="Cashel M."/>
        </authorList>
    </citation>
    <scope>NUCLEOTIDE SEQUENCE [GENOMIC DNA]</scope>
    <source>
        <strain>K12 / JM109 / ATCC 53323</strain>
    </source>
</reference>
<reference key="3">
    <citation type="journal article" date="1993" name="Genomics">
        <title>DNA sequence and analysis of 136 kilobases of the Escherichia coli genome: organizational symmetry around the origin of replication.</title>
        <authorList>
            <person name="Burland V.D."/>
            <person name="Plunkett G. III"/>
            <person name="Daniels D.L."/>
            <person name="Blattner F.R."/>
        </authorList>
    </citation>
    <scope>NUCLEOTIDE SEQUENCE [LARGE SCALE GENOMIC DNA]</scope>
    <source>
        <strain>K12 / MG1655 / ATCC 47076</strain>
    </source>
</reference>
<reference key="4">
    <citation type="journal article" date="1997" name="Science">
        <title>The complete genome sequence of Escherichia coli K-12.</title>
        <authorList>
            <person name="Blattner F.R."/>
            <person name="Plunkett G. III"/>
            <person name="Bloch C.A."/>
            <person name="Perna N.T."/>
            <person name="Burland V."/>
            <person name="Riley M."/>
            <person name="Collado-Vides J."/>
            <person name="Glasner J.D."/>
            <person name="Rode C.K."/>
            <person name="Mayhew G.F."/>
            <person name="Gregor J."/>
            <person name="Davis N.W."/>
            <person name="Kirkpatrick H.A."/>
            <person name="Goeden M.A."/>
            <person name="Rose D.J."/>
            <person name="Mau B."/>
            <person name="Shao Y."/>
        </authorList>
    </citation>
    <scope>NUCLEOTIDE SEQUENCE [LARGE SCALE GENOMIC DNA]</scope>
    <source>
        <strain>K12 / MG1655 / ATCC 47076</strain>
    </source>
</reference>
<reference key="5">
    <citation type="journal article" date="2006" name="Mol. Syst. Biol.">
        <title>Highly accurate genome sequences of Escherichia coli K-12 strains MG1655 and W3110.</title>
        <authorList>
            <person name="Hayashi K."/>
            <person name="Morooka N."/>
            <person name="Yamamoto Y."/>
            <person name="Fujita K."/>
            <person name="Isono K."/>
            <person name="Choi S."/>
            <person name="Ohtsubo E."/>
            <person name="Baba T."/>
            <person name="Wanner B.L."/>
            <person name="Mori H."/>
            <person name="Horiuchi T."/>
        </authorList>
    </citation>
    <scope>NUCLEOTIDE SEQUENCE [LARGE SCALE GENOMIC DNA]</scope>
    <source>
        <strain>K12 / W3110 / ATCC 27325 / DSM 5911</strain>
    </source>
</reference>
<reference key="6">
    <citation type="journal article" date="1998" name="FEMS Microbiol. Lett.">
        <title>Small genes/gene-products in Escherichia coli K-12.</title>
        <authorList>
            <person name="Wasinger V.C."/>
            <person name="Humphery-Smith I."/>
        </authorList>
    </citation>
    <scope>PROTEIN SEQUENCE OF 2-11</scope>
    <source>
        <strain>K12</strain>
    </source>
</reference>
<reference evidence="6" key="7">
    <citation type="journal article" date="2009" name="Proc. Natl. Acad. Sci. U.S.A.">
        <title>Three-dimensional EM structure of an intact activator-dependent transcription initiation complex.</title>
        <authorList>
            <person name="Hudson B.P."/>
            <person name="Quispe J."/>
            <person name="Lara-Gonzalez S."/>
            <person name="Kim Y."/>
            <person name="Berman H.M."/>
            <person name="Arnold E."/>
            <person name="Ebright R.H."/>
            <person name="Lawson C.L."/>
        </authorList>
    </citation>
    <scope>STRUCTURE BY ELECTRON MICROSCOPY (19.80 ANGSTROMS) IN COMPLEX WITH RPOA; RPOB; RPOC; RPOD; CRP AND DNA</scope>
    <scope>DNA-BINDING</scope>
    <scope>SUBUNIT</scope>
</reference>
<reference evidence="7 8" key="8">
    <citation type="journal article" date="2014" name="Elife">
        <title>Transcription inhibition by the depsipeptide antibiotic salinamide A.</title>
        <authorList>
            <person name="Degen D."/>
            <person name="Feng Y."/>
            <person name="Zhang Y."/>
            <person name="Ebright K.Y."/>
            <person name="Ebright Y.W."/>
            <person name="Gigliotti M."/>
            <person name="Vahedian-Movahed H."/>
            <person name="Mandal S."/>
            <person name="Talaue M."/>
            <person name="Connell N."/>
            <person name="Arnold E."/>
            <person name="Fenical W."/>
            <person name="Ebright R.H."/>
        </authorList>
    </citation>
    <scope>X-RAY CRYSTALLOGRAPHY (3.90 ANGSTROMS) IN COMPLEX WITH RPOA; RPOB; RPOC; RPOD AND SALINAMIDE A</scope>
    <scope>FUNCTION</scope>
    <scope>SUBUNIT</scope>
</reference>
<reference evidence="9 10" key="9">
    <citation type="journal article" date="2020" name="Mol. Cell">
        <title>Structure-Based Mechanisms of a Molecular RNA Polymerase/Chaperone Machine Required for Ribosome Biosynthesis.</title>
        <authorList>
            <person name="Huang Y.H."/>
            <person name="Hilal T."/>
            <person name="Loll B."/>
            <person name="Buerger J."/>
            <person name="Mielke T."/>
            <person name="Boettcher C."/>
            <person name="Said N."/>
            <person name="Wahl M.C."/>
        </authorList>
    </citation>
    <scope>STRUCTURE BY ELECTRON MICROSCOPY (3.80 ANGSTROMS) OF RRNA TRANSCRIPTION-ELONGATION-ANTITERMINATION COMPLEXES WITH AND WITHOUT S4</scope>
    <scope>FUNCTION</scope>
    <scope>SUBUNIT</scope>
</reference>
<organism>
    <name type="scientific">Escherichia coli (strain K12)</name>
    <dbReference type="NCBI Taxonomy" id="83333"/>
    <lineage>
        <taxon>Bacteria</taxon>
        <taxon>Pseudomonadati</taxon>
        <taxon>Pseudomonadota</taxon>
        <taxon>Gammaproteobacteria</taxon>
        <taxon>Enterobacterales</taxon>
        <taxon>Enterobacteriaceae</taxon>
        <taxon>Escherichia</taxon>
    </lineage>
</organism>
<protein>
    <recommendedName>
        <fullName>DNA-directed RNA polymerase subunit omega</fullName>
        <shortName>RNAP omega subunit</shortName>
        <ecNumber>2.7.7.6</ecNumber>
    </recommendedName>
    <alternativeName>
        <fullName>RNA polymerase omega subunit</fullName>
    </alternativeName>
    <alternativeName>
        <fullName>Transcriptase subunit omega</fullName>
    </alternativeName>
</protein>
<sequence length="91" mass="10237">MARVTVQDAVEKIGNRFDLVLVAARRARQMQVGGKDPLVPEENDKTTVIALREIEEGLINNQILDVRERQEQQEQEAAELQAVTAIAEGRR</sequence>
<name>RPOZ_ECOLI</name>
<comment type="function">
    <text evidence="2">Promotes RNA polymerase (RNAP) assembly. Latches the N- and C-terminal regions of the beta' subunit thereby facilitating its interaction with the beta and alpha subunits.</text>
</comment>
<comment type="function">
    <text evidence="3">Part of the processive rRNA transcription and antitermination complex (rrnTAC). The complex forms an RNA-chaperone ring around the RNA exit tunnel of RNAP. It supports rapid transcription and antitermination of rRNA operons, cotranscriptional rRNA folding, and annealing of distal rRNA regions to allow correct ribosome biogenesis.</text>
</comment>
<comment type="catalytic activity">
    <reaction>
        <text>RNA(n) + a ribonucleoside 5'-triphosphate = RNA(n+1) + diphosphate</text>
        <dbReference type="Rhea" id="RHEA:21248"/>
        <dbReference type="Rhea" id="RHEA-COMP:14527"/>
        <dbReference type="Rhea" id="RHEA-COMP:17342"/>
        <dbReference type="ChEBI" id="CHEBI:33019"/>
        <dbReference type="ChEBI" id="CHEBI:61557"/>
        <dbReference type="ChEBI" id="CHEBI:140395"/>
        <dbReference type="EC" id="2.7.7.6"/>
    </reaction>
</comment>
<comment type="subunit">
    <text evidence="1 2 3">The RNAP catalytic core consists of 2 alpha, 1 beta, 1 beta' and 1 omega subunit. When a sigma factor is associated with the core the holoenzyme is formed, which can initiate transcription. The rRNA transcription and antitermination complex (rrnTAC) consists of RNAP, NusA, NusB, NusE (rpsJ), NusG, SubB, ribosomal protein S4, DNA and precursor rRNA; S4 is more flexible than other subunits (PubMed:32871103).</text>
</comment>
<comment type="similarity">
    <text evidence="5">Belongs to the RNA polymerase subunit omega family.</text>
</comment>
<gene>
    <name type="primary">rpoZ</name>
    <name type="ordered locus">b3649</name>
    <name type="ordered locus">JW3624</name>
</gene>